<comment type="function">
    <text evidence="4">Component of the 26S proteasome, a multiprotein complex involved in the ATP-dependent degradation of ubiquitinated proteins. This complex plays a key role in the maintenance of protein homeostasis by removing misfolded or damaged proteins, which could impair cellular functions, and by removing proteins whose functions are no longer required. Therefore, the proteasome participates in numerous cellular processes, including cell cycle progression, apoptosis, or DNA damage repair. PSMC5 belongs to the heterohexameric ring of AAA (ATPases associated with diverse cellular activities) proteins that unfolds ubiquitinated target proteins that are concurrently translocated into a proteolytic chamber and degraded into peptides.</text>
</comment>
<comment type="subunit">
    <text evidence="1 3 5 7 8 10 11 12 13">Component of the 19S proteasome regulatory particle complex. The 26S proteasome consists of a 20S core particle (CP) and two 19S regulatory subunits (RP). The regulatory particle is made of a lid composed of 9 subunits, a base containing 6 ATPases including PSMC5 and few additional components (PubMed:27342858, PubMed:27428775). Component of a complex with USP49 and RUVBL1 (PubMed:23824326). Interacts with PRPF19. Interacts with TRIM5 (PubMed:22078707). Interacts with NDC80 (PubMed:10409732, PubMed:9295362). Interacts with PAAF1 (PubMed:15831487). Interacts, in vitro, with the thyroid hormone receptor (in a thyroid hormone T3-dependent manner) and with retinoid X receptor (RXR) (By similarity). Interacts with ERCC6 (PubMed:26030138).</text>
</comment>
<comment type="interaction">
    <interactant intactId="EBI-357745">
        <id>P62195</id>
    </interactant>
    <interactant intactId="EBI-1642333">
        <id>Q9BYV9</id>
        <label>BACH2</label>
    </interactant>
    <organismsDiffer>false</organismsDiffer>
    <experiments>3</experiments>
</comment>
<comment type="interaction">
    <interactant intactId="EBI-357745">
        <id>P62195</id>
    </interactant>
    <interactant intactId="EBI-10229433">
        <id>Q13515</id>
        <label>BFSP2</label>
    </interactant>
    <organismsDiffer>false</organismsDiffer>
    <experiments>3</experiments>
</comment>
<comment type="interaction">
    <interactant intactId="EBI-357745">
        <id>P62195</id>
    </interactant>
    <interactant intactId="EBI-749051">
        <id>Q8IYR0</id>
        <label>CFAP206</label>
    </interactant>
    <organismsDiffer>false</organismsDiffer>
    <experiments>3</experiments>
</comment>
<comment type="interaction">
    <interactant intactId="EBI-357745">
        <id>P62195</id>
    </interactant>
    <interactant intactId="EBI-1183307">
        <id>P19447</id>
        <label>ERCC3</label>
    </interactant>
    <organismsDiffer>false</organismsDiffer>
    <experiments>4</experiments>
</comment>
<comment type="interaction">
    <interactant intactId="EBI-357745">
        <id>P62195</id>
    </interactant>
    <interactant intactId="EBI-12001340">
        <id>P62508-3</id>
        <label>ESRRG</label>
    </interactant>
    <organismsDiffer>false</organismsDiffer>
    <experiments>5</experiments>
</comment>
<comment type="interaction">
    <interactant intactId="EBI-357745">
        <id>P62195</id>
    </interactant>
    <interactant intactId="EBI-10198738">
        <id>Q6FG41</id>
        <label>FOS</label>
    </interactant>
    <organismsDiffer>false</organismsDiffer>
    <experiments>3</experiments>
</comment>
<comment type="interaction">
    <interactant intactId="EBI-357745">
        <id>P62195</id>
    </interactant>
    <interactant intactId="EBI-3044087">
        <id>Q7Z3Y8</id>
        <label>KRT27</label>
    </interactant>
    <organismsDiffer>false</organismsDiffer>
    <experiments>3</experiments>
</comment>
<comment type="interaction">
    <interactant intactId="EBI-357745">
        <id>P62195</id>
    </interactant>
    <interactant intactId="EBI-948001">
        <id>Q15323</id>
        <label>KRT31</label>
    </interactant>
    <organismsDiffer>false</organismsDiffer>
    <experiments>3</experiments>
</comment>
<comment type="interaction">
    <interactant intactId="EBI-357745">
        <id>P62195</id>
    </interactant>
    <interactant intactId="EBI-1047263">
        <id>O76015</id>
        <label>KRT38</label>
    </interactant>
    <organismsDiffer>false</organismsDiffer>
    <experiments>6</experiments>
</comment>
<comment type="interaction">
    <interactant intactId="EBI-357745">
        <id>P62195</id>
    </interactant>
    <interactant intactId="EBI-10171697">
        <id>Q6A162</id>
        <label>KRT40</label>
    </interactant>
    <organismsDiffer>false</organismsDiffer>
    <experiments>5</experiments>
</comment>
<comment type="interaction">
    <interactant intactId="EBI-357745">
        <id>P62195</id>
    </interactant>
    <interactant intactId="EBI-1056358">
        <id>Q9BRP4</id>
        <label>PAAF1</label>
    </interactant>
    <organismsDiffer>false</organismsDiffer>
    <experiments>5</experiments>
</comment>
<comment type="interaction">
    <interactant intactId="EBI-357745">
        <id>P62195</id>
    </interactant>
    <interactant intactId="EBI-5772890">
        <id>Q13371</id>
        <label>PDCL</label>
    </interactant>
    <organismsDiffer>false</organismsDiffer>
    <experiments>16</experiments>
</comment>
<comment type="interaction">
    <interactant intactId="EBI-357745">
        <id>P62195</id>
    </interactant>
    <interactant intactId="EBI-949945">
        <id>Q53GL0</id>
        <label>PLEKHO1</label>
    </interactant>
    <organismsDiffer>false</organismsDiffer>
    <experiments>10</experiments>
</comment>
<comment type="interaction">
    <interactant intactId="EBI-357745">
        <id>P62195</id>
    </interactant>
    <interactant intactId="EBI-359710">
        <id>P35998</id>
        <label>PSMC2</label>
    </interactant>
    <organismsDiffer>false</organismsDiffer>
    <experiments>14</experiments>
</comment>
<comment type="interaction">
    <interactant intactId="EBI-357745">
        <id>P62195</id>
    </interactant>
    <interactant intactId="EBI-743997">
        <id>P43686</id>
        <label>PSMC4</label>
    </interactant>
    <organismsDiffer>false</organismsDiffer>
    <experiments>19</experiments>
</comment>
<comment type="interaction">
    <interactant intactId="EBI-357745">
        <id>P62195</id>
    </interactant>
    <interactant intactId="EBI-357669">
        <id>P62333</id>
        <label>PSMC6</label>
    </interactant>
    <organismsDiffer>false</organismsDiffer>
    <experiments>17</experiments>
</comment>
<comment type="interaction">
    <interactant intactId="EBI-357745">
        <id>P62195</id>
    </interactant>
    <interactant intactId="EBI-357648">
        <id>Q13200</id>
        <label>PSMD2</label>
    </interactant>
    <organismsDiffer>false</organismsDiffer>
    <experiments>14</experiments>
</comment>
<comment type="interaction">
    <interactant intactId="EBI-357745">
        <id>P62195</id>
    </interactant>
    <interactant intactId="EBI-359318">
        <id>P55036</id>
        <label>PSMD4</label>
    </interactant>
    <organismsDiffer>false</organismsDiffer>
    <experiments>5</experiments>
</comment>
<comment type="interaction">
    <interactant intactId="EBI-357745">
        <id>P62195</id>
    </interactant>
    <interactant intactId="EBI-8583223">
        <id>P10826-2</id>
        <label>RARB</label>
    </interactant>
    <organismsDiffer>false</organismsDiffer>
    <experiments>3</experiments>
</comment>
<comment type="interaction">
    <interactant intactId="EBI-357745">
        <id>P62195</id>
    </interactant>
    <interactant intactId="EBI-18560266">
        <id>Q92753-1</id>
        <label>RORB</label>
    </interactant>
    <organismsDiffer>false</organismsDiffer>
    <experiments>3</experiments>
</comment>
<comment type="interaction">
    <interactant intactId="EBI-357745">
        <id>P62195</id>
    </interactant>
    <interactant intactId="EBI-3908771">
        <id>P51449</id>
        <label>RORC</label>
    </interactant>
    <organismsDiffer>false</organismsDiffer>
    <experiments>3</experiments>
</comment>
<comment type="interaction">
    <interactant intactId="EBI-357745">
        <id>P62195</id>
    </interactant>
    <interactant intactId="EBI-741854">
        <id>Q96BD8</id>
        <label>SKA1</label>
    </interactant>
    <organismsDiffer>false</organismsDiffer>
    <experiments>8</experiments>
</comment>
<comment type="interaction">
    <interactant intactId="EBI-357745">
        <id>P62195</id>
    </interactant>
    <interactant intactId="EBI-1105213">
        <id>Q9UBB9</id>
        <label>TFIP11</label>
    </interactant>
    <organismsDiffer>false</organismsDiffer>
    <experiments>3</experiments>
</comment>
<comment type="interaction">
    <interactant intactId="EBI-357745">
        <id>P62195</id>
    </interactant>
    <interactant intactId="EBI-1790529">
        <id>Q96EK4</id>
        <label>THAP11</label>
    </interactant>
    <organismsDiffer>false</organismsDiffer>
    <experiments>3</experiments>
</comment>
<comment type="interaction">
    <interactant intactId="EBI-357745">
        <id>P62195</id>
    </interactant>
    <interactant intactId="EBI-7746394">
        <id>P48788</id>
        <label>TNNI2</label>
    </interactant>
    <organismsDiffer>false</organismsDiffer>
    <experiments>3</experiments>
</comment>
<comment type="interaction">
    <interactant intactId="EBI-357745">
        <id>P62195</id>
    </interactant>
    <interactant intactId="EBI-12123928">
        <id>P09493-10</id>
        <label>TPM1</label>
    </interactant>
    <organismsDiffer>false</organismsDiffer>
    <experiments>3</experiments>
</comment>
<comment type="interaction">
    <interactant intactId="EBI-357745">
        <id>P62195</id>
    </interactant>
    <interactant intactId="EBI-355607">
        <id>P06753</id>
        <label>TPM3</label>
    </interactant>
    <organismsDiffer>false</organismsDiffer>
    <experiments>3</experiments>
</comment>
<comment type="interaction">
    <interactant intactId="EBI-357745">
        <id>P62195</id>
    </interactant>
    <interactant intactId="EBI-372610">
        <id>Q01831</id>
        <label>XPC</label>
    </interactant>
    <organismsDiffer>false</organismsDiffer>
    <experiments>2</experiments>
</comment>
<comment type="interaction">
    <interactant intactId="EBI-357745">
        <id>P62195</id>
    </interactant>
    <interactant intactId="EBI-2640645">
        <id>P11275</id>
        <label>Camk2a</label>
    </interactant>
    <organismsDiffer>true</organismsDiffer>
    <experiments>4</experiments>
</comment>
<comment type="interaction">
    <interactant intactId="EBI-357745">
        <id>P62195</id>
    </interactant>
    <interactant intactId="EBI-916155">
        <id>P08413</id>
        <label>Camk2b</label>
    </interactant>
    <organismsDiffer>true</organismsDiffer>
    <experiments>3</experiments>
</comment>
<comment type="interaction">
    <interactant intactId="EBI-357745">
        <id>P62195</id>
    </interactant>
    <interactant intactId="EBI-6692439">
        <id>P03255-1</id>
    </interactant>
    <organismsDiffer>true</organismsDiffer>
    <experiments>2</experiments>
</comment>
<comment type="subcellular location">
    <subcellularLocation>
        <location evidence="15">Cytoplasm</location>
    </subcellularLocation>
    <subcellularLocation>
        <location evidence="15">Nucleus</location>
    </subcellularLocation>
</comment>
<comment type="alternative products">
    <event type="alternative splicing"/>
    <isoform>
        <id>P62195-1</id>
        <name>1</name>
        <sequence type="displayed"/>
    </isoform>
    <isoform>
        <id>P62195-2</id>
        <name>2</name>
        <sequence type="described" ref="VSP_045441"/>
    </isoform>
</comment>
<comment type="similarity">
    <text evidence="15">Belongs to the AAA ATPase family.</text>
</comment>
<gene>
    <name type="primary">PSMC5</name>
    <name type="synonym">SUG1</name>
</gene>
<proteinExistence type="evidence at protein level"/>
<sequence>MALDGPEQMELEEGKAGSGLRQYYLSKIEELQLIVNDKSQNLRRLQAQRNELNAKVRLLREELQLLQEQGSYVGEVVRAMDKKKVLVKVHPEGKFVVDVDKNIDINDVTPNCRVALRNDSYTLHKILPNKVDPLVSLMMVEKVPDSTYEMIGGLDKQIKEIKEVIELPVKHPELFEALGIAQPKGVLLYGPPGTGKTLLARAVAHHTDCTFIRVSGSELVQKFIGEGARMVRELFVMAREHAPSIIFMDEIDSIGSSRLEGGSGGDSEVQRTMLELLNQLDGFEATKNIKVIMATNRIDILDSALLRPGRIDRKIEFPPPNEEARLDILKIHSRKMNLTRGINLRKIAELMPGASGAEVKGVCTEAGMYALRERRVHVTQEDFEMAVAKVMQKDSEKNMSIKKLWK</sequence>
<keyword id="KW-0002">3D-structure</keyword>
<keyword id="KW-0007">Acetylation</keyword>
<keyword id="KW-0025">Alternative splicing</keyword>
<keyword id="KW-0067">ATP-binding</keyword>
<keyword id="KW-0963">Cytoplasm</keyword>
<keyword id="KW-0547">Nucleotide-binding</keyword>
<keyword id="KW-0539">Nucleus</keyword>
<keyword id="KW-0597">Phosphoprotein</keyword>
<keyword id="KW-0647">Proteasome</keyword>
<keyword id="KW-1267">Proteomics identification</keyword>
<keyword id="KW-1185">Reference proteome</keyword>
<dbReference type="EMBL" id="D44467">
    <property type="protein sequence ID" value="BAA07919.1"/>
    <property type="molecule type" value="mRNA"/>
</dbReference>
<dbReference type="EMBL" id="L38810">
    <property type="protein sequence ID" value="AAC41735.1"/>
    <property type="molecule type" value="mRNA"/>
</dbReference>
<dbReference type="EMBL" id="AK290758">
    <property type="protein sequence ID" value="BAF83447.1"/>
    <property type="molecule type" value="mRNA"/>
</dbReference>
<dbReference type="EMBL" id="AK291878">
    <property type="protein sequence ID" value="BAF84567.1"/>
    <property type="molecule type" value="mRNA"/>
</dbReference>
<dbReference type="EMBL" id="AC015651">
    <property type="status" value="NOT_ANNOTATED_CDS"/>
    <property type="molecule type" value="Genomic_DNA"/>
</dbReference>
<dbReference type="EMBL" id="CH471109">
    <property type="protein sequence ID" value="EAW94270.1"/>
    <property type="molecule type" value="Genomic_DNA"/>
</dbReference>
<dbReference type="EMBL" id="CH471109">
    <property type="protein sequence ID" value="EAW94271.1"/>
    <property type="molecule type" value="Genomic_DNA"/>
</dbReference>
<dbReference type="EMBL" id="CH471109">
    <property type="protein sequence ID" value="EAW94272.1"/>
    <property type="molecule type" value="Genomic_DNA"/>
</dbReference>
<dbReference type="EMBL" id="BC001932">
    <property type="protein sequence ID" value="AAH01932.1"/>
    <property type="molecule type" value="mRNA"/>
</dbReference>
<dbReference type="EMBL" id="BC002367">
    <property type="protein sequence ID" value="AAH02367.3"/>
    <property type="molecule type" value="mRNA"/>
</dbReference>
<dbReference type="EMBL" id="AF035309">
    <property type="protein sequence ID" value="AAB88187.1"/>
    <property type="molecule type" value="mRNA"/>
</dbReference>
<dbReference type="CCDS" id="CCDS11645.1">
    <molecule id="P62195-1"/>
</dbReference>
<dbReference type="CCDS" id="CCDS56043.1">
    <molecule id="P62195-2"/>
</dbReference>
<dbReference type="PIR" id="S60343">
    <property type="entry name" value="S60343"/>
</dbReference>
<dbReference type="PIR" id="S65536">
    <property type="entry name" value="S65536"/>
</dbReference>
<dbReference type="RefSeq" id="NP_001186092.1">
    <molecule id="P62195-2"/>
    <property type="nucleotide sequence ID" value="NM_001199163.2"/>
</dbReference>
<dbReference type="RefSeq" id="NP_002796.4">
    <molecule id="P62195-1"/>
    <property type="nucleotide sequence ID" value="NM_002805.5"/>
</dbReference>
<dbReference type="RefSeq" id="XP_054172684.1">
    <molecule id="P62195-1"/>
    <property type="nucleotide sequence ID" value="XM_054316709.1"/>
</dbReference>
<dbReference type="PDB" id="2KRK">
    <property type="method" value="NMR"/>
    <property type="chains" value="A=320-395"/>
</dbReference>
<dbReference type="PDB" id="3KW6">
    <property type="method" value="X-ray"/>
    <property type="resolution" value="2.10 A"/>
    <property type="chains" value="A=318-395"/>
</dbReference>
<dbReference type="PDB" id="5GJQ">
    <property type="method" value="EM"/>
    <property type="resolution" value="4.50 A"/>
    <property type="chains" value="J=1-406"/>
</dbReference>
<dbReference type="PDB" id="5GJR">
    <property type="method" value="EM"/>
    <property type="resolution" value="3.50 A"/>
    <property type="chains" value="J/x=1-406"/>
</dbReference>
<dbReference type="PDB" id="5L4G">
    <property type="method" value="EM"/>
    <property type="resolution" value="4.02 A"/>
    <property type="chains" value="J=1-406"/>
</dbReference>
<dbReference type="PDB" id="5LN3">
    <property type="method" value="EM"/>
    <property type="resolution" value="6.80 A"/>
    <property type="chains" value="J=1-406"/>
</dbReference>
<dbReference type="PDB" id="5M32">
    <property type="method" value="EM"/>
    <property type="resolution" value="3.80 A"/>
    <property type="chains" value="h=38-392"/>
</dbReference>
<dbReference type="PDB" id="5T0C">
    <property type="method" value="EM"/>
    <property type="resolution" value="3.80 A"/>
    <property type="chains" value="AC/BC=1-406"/>
</dbReference>
<dbReference type="PDB" id="5T0G">
    <property type="method" value="EM"/>
    <property type="resolution" value="4.40 A"/>
    <property type="chains" value="C=9-406"/>
</dbReference>
<dbReference type="PDB" id="5T0H">
    <property type="method" value="EM"/>
    <property type="resolution" value="6.80 A"/>
    <property type="chains" value="C=9-406"/>
</dbReference>
<dbReference type="PDB" id="5T0I">
    <property type="method" value="EM"/>
    <property type="resolution" value="8.00 A"/>
    <property type="chains" value="C=9-406"/>
</dbReference>
<dbReference type="PDB" id="5T0J">
    <property type="method" value="EM"/>
    <property type="resolution" value="8.00 A"/>
    <property type="chains" value="C=9-406"/>
</dbReference>
<dbReference type="PDB" id="5VFP">
    <property type="method" value="EM"/>
    <property type="resolution" value="4.20 A"/>
    <property type="chains" value="C=11-402"/>
</dbReference>
<dbReference type="PDB" id="5VFQ">
    <property type="method" value="EM"/>
    <property type="resolution" value="4.20 A"/>
    <property type="chains" value="C=11-402"/>
</dbReference>
<dbReference type="PDB" id="5VFR">
    <property type="method" value="EM"/>
    <property type="resolution" value="4.90 A"/>
    <property type="chains" value="C=11-402"/>
</dbReference>
<dbReference type="PDB" id="5VFS">
    <property type="method" value="EM"/>
    <property type="resolution" value="3.60 A"/>
    <property type="chains" value="C=9-397"/>
</dbReference>
<dbReference type="PDB" id="5VFT">
    <property type="method" value="EM"/>
    <property type="resolution" value="7.00 A"/>
    <property type="chains" value="C=11-394"/>
</dbReference>
<dbReference type="PDB" id="5VFU">
    <property type="method" value="EM"/>
    <property type="resolution" value="5.80 A"/>
    <property type="chains" value="C=11-394"/>
</dbReference>
<dbReference type="PDB" id="5VGZ">
    <property type="method" value="EM"/>
    <property type="resolution" value="3.70 A"/>
    <property type="chains" value="C=11-128"/>
</dbReference>
<dbReference type="PDB" id="5VHF">
    <property type="method" value="EM"/>
    <property type="resolution" value="5.70 A"/>
    <property type="chains" value="C=11-395"/>
</dbReference>
<dbReference type="PDB" id="5VHH">
    <property type="method" value="EM"/>
    <property type="resolution" value="6.10 A"/>
    <property type="chains" value="C=11-395"/>
</dbReference>
<dbReference type="PDB" id="5VHI">
    <property type="method" value="EM"/>
    <property type="resolution" value="6.80 A"/>
    <property type="chains" value="C=11-395"/>
</dbReference>
<dbReference type="PDB" id="5VHJ">
    <property type="method" value="EM"/>
    <property type="resolution" value="8.50 A"/>
    <property type="chains" value="C=130-395"/>
</dbReference>
<dbReference type="PDB" id="5VHM">
    <property type="method" value="EM"/>
    <property type="resolution" value="8.30 A"/>
    <property type="chains" value="C=130-395"/>
</dbReference>
<dbReference type="PDB" id="5VHN">
    <property type="method" value="EM"/>
    <property type="resolution" value="7.30 A"/>
    <property type="chains" value="C=130-395"/>
</dbReference>
<dbReference type="PDB" id="5VHO">
    <property type="method" value="EM"/>
    <property type="resolution" value="8.30 A"/>
    <property type="chains" value="C=130-395"/>
</dbReference>
<dbReference type="PDB" id="5VHP">
    <property type="method" value="EM"/>
    <property type="resolution" value="7.90 A"/>
    <property type="chains" value="C=130-395"/>
</dbReference>
<dbReference type="PDB" id="5VHQ">
    <property type="method" value="EM"/>
    <property type="resolution" value="8.90 A"/>
    <property type="chains" value="C=130-395"/>
</dbReference>
<dbReference type="PDB" id="5VHR">
    <property type="method" value="EM"/>
    <property type="resolution" value="7.70 A"/>
    <property type="chains" value="C=130-395"/>
</dbReference>
<dbReference type="PDB" id="5VHS">
    <property type="method" value="EM"/>
    <property type="resolution" value="8.80 A"/>
    <property type="chains" value="C=11-395"/>
</dbReference>
<dbReference type="PDB" id="6MSB">
    <property type="method" value="EM"/>
    <property type="resolution" value="3.00 A"/>
    <property type="chains" value="C=9-406"/>
</dbReference>
<dbReference type="PDB" id="6MSD">
    <property type="method" value="EM"/>
    <property type="resolution" value="3.20 A"/>
    <property type="chains" value="C=9-406"/>
</dbReference>
<dbReference type="PDB" id="6MSG">
    <property type="method" value="EM"/>
    <property type="resolution" value="3.50 A"/>
    <property type="chains" value="C=9-406"/>
</dbReference>
<dbReference type="PDB" id="6MSH">
    <property type="method" value="EM"/>
    <property type="resolution" value="3.60 A"/>
    <property type="chains" value="C=9-406"/>
</dbReference>
<dbReference type="PDB" id="6MSJ">
    <property type="method" value="EM"/>
    <property type="resolution" value="3.30 A"/>
    <property type="chains" value="C=9-406"/>
</dbReference>
<dbReference type="PDB" id="6MSK">
    <property type="method" value="EM"/>
    <property type="resolution" value="3.20 A"/>
    <property type="chains" value="C=9-406"/>
</dbReference>
<dbReference type="PDB" id="6WJD">
    <property type="method" value="EM"/>
    <property type="resolution" value="4.80 A"/>
    <property type="chains" value="C=9-406"/>
</dbReference>
<dbReference type="PDB" id="6WJN">
    <property type="method" value="EM"/>
    <property type="resolution" value="5.70 A"/>
    <property type="chains" value="C=11-402"/>
</dbReference>
<dbReference type="PDB" id="7QXN">
    <property type="method" value="EM"/>
    <property type="resolution" value="3.70 A"/>
    <property type="chains" value="C=9-406"/>
</dbReference>
<dbReference type="PDB" id="7QXP">
    <property type="method" value="EM"/>
    <property type="resolution" value="3.60 A"/>
    <property type="chains" value="C=9-406"/>
</dbReference>
<dbReference type="PDB" id="7QXU">
    <property type="method" value="EM"/>
    <property type="resolution" value="4.30 A"/>
    <property type="chains" value="C=9-397"/>
</dbReference>
<dbReference type="PDB" id="7QXW">
    <property type="method" value="EM"/>
    <property type="resolution" value="4.10 A"/>
    <property type="chains" value="C=9-406"/>
</dbReference>
<dbReference type="PDB" id="7QXX">
    <property type="method" value="EM"/>
    <property type="resolution" value="4.40 A"/>
    <property type="chains" value="C=9-397"/>
</dbReference>
<dbReference type="PDB" id="7QY7">
    <property type="method" value="EM"/>
    <property type="resolution" value="4.70 A"/>
    <property type="chains" value="C=9-402"/>
</dbReference>
<dbReference type="PDB" id="7QYA">
    <property type="method" value="EM"/>
    <property type="resolution" value="4.80 A"/>
    <property type="chains" value="C=9-406"/>
</dbReference>
<dbReference type="PDB" id="7QYB">
    <property type="method" value="EM"/>
    <property type="resolution" value="4.10 A"/>
    <property type="chains" value="C=9-406"/>
</dbReference>
<dbReference type="PDB" id="7W37">
    <property type="method" value="EM"/>
    <property type="resolution" value="3.00 A"/>
    <property type="chains" value="C=9-406"/>
</dbReference>
<dbReference type="PDB" id="7W38">
    <property type="method" value="EM"/>
    <property type="resolution" value="3.10 A"/>
    <property type="chains" value="C=9-406"/>
</dbReference>
<dbReference type="PDB" id="7W39">
    <property type="method" value="EM"/>
    <property type="resolution" value="3.20 A"/>
    <property type="chains" value="C=9-406"/>
</dbReference>
<dbReference type="PDB" id="7W3A">
    <property type="method" value="EM"/>
    <property type="resolution" value="3.50 A"/>
    <property type="chains" value="C=9-406"/>
</dbReference>
<dbReference type="PDB" id="7W3B">
    <property type="method" value="EM"/>
    <property type="resolution" value="3.60 A"/>
    <property type="chains" value="C=9-406"/>
</dbReference>
<dbReference type="PDB" id="7W3C">
    <property type="method" value="EM"/>
    <property type="resolution" value="3.40 A"/>
    <property type="chains" value="C=9-406"/>
</dbReference>
<dbReference type="PDB" id="7W3F">
    <property type="method" value="EM"/>
    <property type="resolution" value="3.30 A"/>
    <property type="chains" value="C=9-406"/>
</dbReference>
<dbReference type="PDB" id="7W3G">
    <property type="method" value="EM"/>
    <property type="resolution" value="3.20 A"/>
    <property type="chains" value="C=9-406"/>
</dbReference>
<dbReference type="PDB" id="7W3H">
    <property type="method" value="EM"/>
    <property type="resolution" value="3.20 A"/>
    <property type="chains" value="C=9-406"/>
</dbReference>
<dbReference type="PDB" id="7W3I">
    <property type="method" value="EM"/>
    <property type="resolution" value="3.50 A"/>
    <property type="chains" value="C=9-406"/>
</dbReference>
<dbReference type="PDB" id="7W3J">
    <property type="method" value="EM"/>
    <property type="resolution" value="3.50 A"/>
    <property type="chains" value="C=9-406"/>
</dbReference>
<dbReference type="PDB" id="7W3K">
    <property type="method" value="EM"/>
    <property type="resolution" value="3.60 A"/>
    <property type="chains" value="C=9-406"/>
</dbReference>
<dbReference type="PDB" id="7W3M">
    <property type="method" value="EM"/>
    <property type="resolution" value="3.50 A"/>
    <property type="chains" value="C=9-406"/>
</dbReference>
<dbReference type="PDB" id="8CVT">
    <property type="method" value="EM"/>
    <property type="resolution" value="3.00 A"/>
    <property type="chains" value="C=1-406"/>
</dbReference>
<dbReference type="PDB" id="8JRI">
    <property type="method" value="EM"/>
    <property type="resolution" value="3.40 A"/>
    <property type="chains" value="C=1-406"/>
</dbReference>
<dbReference type="PDB" id="8JRT">
    <property type="method" value="EM"/>
    <property type="resolution" value="3.60 A"/>
    <property type="chains" value="C=1-406"/>
</dbReference>
<dbReference type="PDB" id="8JTI">
    <property type="method" value="EM"/>
    <property type="resolution" value="3.80 A"/>
    <property type="chains" value="C=1-406"/>
</dbReference>
<dbReference type="PDB" id="8K0G">
    <property type="method" value="EM"/>
    <property type="resolution" value="3.80 A"/>
    <property type="chains" value="C=1-406"/>
</dbReference>
<dbReference type="PDB" id="8USB">
    <property type="method" value="EM"/>
    <property type="resolution" value="2.73 A"/>
    <property type="chains" value="C=1-406"/>
</dbReference>
<dbReference type="PDB" id="8USC">
    <property type="method" value="EM"/>
    <property type="resolution" value="3.10 A"/>
    <property type="chains" value="C=1-406"/>
</dbReference>
<dbReference type="PDB" id="9E8G">
    <property type="method" value="EM"/>
    <property type="resolution" value="3.01 A"/>
    <property type="chains" value="C=1-406"/>
</dbReference>
<dbReference type="PDB" id="9E8H">
    <property type="method" value="EM"/>
    <property type="resolution" value="2.90 A"/>
    <property type="chains" value="C=1-406"/>
</dbReference>
<dbReference type="PDB" id="9E8I">
    <property type="method" value="EM"/>
    <property type="resolution" value="2.87 A"/>
    <property type="chains" value="C=1-406"/>
</dbReference>
<dbReference type="PDB" id="9E8J">
    <property type="method" value="EM"/>
    <property type="resolution" value="3.47 A"/>
    <property type="chains" value="C=1-406"/>
</dbReference>
<dbReference type="PDB" id="9E8K">
    <property type="method" value="EM"/>
    <property type="resolution" value="4.08 A"/>
    <property type="chains" value="C=1-406"/>
</dbReference>
<dbReference type="PDB" id="9E8L">
    <property type="method" value="EM"/>
    <property type="resolution" value="3.59 A"/>
    <property type="chains" value="C=1-406"/>
</dbReference>
<dbReference type="PDB" id="9E8N">
    <property type="method" value="EM"/>
    <property type="resolution" value="3.62 A"/>
    <property type="chains" value="C=1-406"/>
</dbReference>
<dbReference type="PDB" id="9E8O">
    <property type="method" value="EM"/>
    <property type="resolution" value="3.10 A"/>
    <property type="chains" value="C=1-406"/>
</dbReference>
<dbReference type="PDB" id="9E8Q">
    <property type="method" value="EM"/>
    <property type="resolution" value="3.16 A"/>
    <property type="chains" value="C=1-406"/>
</dbReference>
<dbReference type="PDBsum" id="2KRK"/>
<dbReference type="PDBsum" id="3KW6"/>
<dbReference type="PDBsum" id="5GJQ"/>
<dbReference type="PDBsum" id="5GJR"/>
<dbReference type="PDBsum" id="5L4G"/>
<dbReference type="PDBsum" id="5LN3"/>
<dbReference type="PDBsum" id="5M32"/>
<dbReference type="PDBsum" id="5T0C"/>
<dbReference type="PDBsum" id="5T0G"/>
<dbReference type="PDBsum" id="5T0H"/>
<dbReference type="PDBsum" id="5T0I"/>
<dbReference type="PDBsum" id="5T0J"/>
<dbReference type="PDBsum" id="5VFP"/>
<dbReference type="PDBsum" id="5VFQ"/>
<dbReference type="PDBsum" id="5VFR"/>
<dbReference type="PDBsum" id="5VFS"/>
<dbReference type="PDBsum" id="5VFT"/>
<dbReference type="PDBsum" id="5VFU"/>
<dbReference type="PDBsum" id="5VGZ"/>
<dbReference type="PDBsum" id="5VHF"/>
<dbReference type="PDBsum" id="5VHH"/>
<dbReference type="PDBsum" id="5VHI"/>
<dbReference type="PDBsum" id="5VHJ"/>
<dbReference type="PDBsum" id="5VHM"/>
<dbReference type="PDBsum" id="5VHN"/>
<dbReference type="PDBsum" id="5VHO"/>
<dbReference type="PDBsum" id="5VHP"/>
<dbReference type="PDBsum" id="5VHQ"/>
<dbReference type="PDBsum" id="5VHR"/>
<dbReference type="PDBsum" id="5VHS"/>
<dbReference type="PDBsum" id="6MSB"/>
<dbReference type="PDBsum" id="6MSD"/>
<dbReference type="PDBsum" id="6MSG"/>
<dbReference type="PDBsum" id="6MSH"/>
<dbReference type="PDBsum" id="6MSJ"/>
<dbReference type="PDBsum" id="6MSK"/>
<dbReference type="PDBsum" id="6WJD"/>
<dbReference type="PDBsum" id="6WJN"/>
<dbReference type="PDBsum" id="7QXN"/>
<dbReference type="PDBsum" id="7QXP"/>
<dbReference type="PDBsum" id="7QXU"/>
<dbReference type="PDBsum" id="7QXW"/>
<dbReference type="PDBsum" id="7QXX"/>
<dbReference type="PDBsum" id="7QY7"/>
<dbReference type="PDBsum" id="7QYA"/>
<dbReference type="PDBsum" id="7QYB"/>
<dbReference type="PDBsum" id="7W37"/>
<dbReference type="PDBsum" id="7W38"/>
<dbReference type="PDBsum" id="7W39"/>
<dbReference type="PDBsum" id="7W3A"/>
<dbReference type="PDBsum" id="7W3B"/>
<dbReference type="PDBsum" id="7W3C"/>
<dbReference type="PDBsum" id="7W3F"/>
<dbReference type="PDBsum" id="7W3G"/>
<dbReference type="PDBsum" id="7W3H"/>
<dbReference type="PDBsum" id="7W3I"/>
<dbReference type="PDBsum" id="7W3J"/>
<dbReference type="PDBsum" id="7W3K"/>
<dbReference type="PDBsum" id="7W3M"/>
<dbReference type="PDBsum" id="8CVT"/>
<dbReference type="PDBsum" id="8JRI"/>
<dbReference type="PDBsum" id="8JRT"/>
<dbReference type="PDBsum" id="8JTI"/>
<dbReference type="PDBsum" id="8K0G"/>
<dbReference type="PDBsum" id="8USB"/>
<dbReference type="PDBsum" id="8USC"/>
<dbReference type="PDBsum" id="9E8G"/>
<dbReference type="PDBsum" id="9E8H"/>
<dbReference type="PDBsum" id="9E8I"/>
<dbReference type="PDBsum" id="9E8J"/>
<dbReference type="PDBsum" id="9E8K"/>
<dbReference type="PDBsum" id="9E8L"/>
<dbReference type="PDBsum" id="9E8N"/>
<dbReference type="PDBsum" id="9E8O"/>
<dbReference type="PDBsum" id="9E8Q"/>
<dbReference type="BMRB" id="P62195"/>
<dbReference type="EMDB" id="EMD-14201"/>
<dbReference type="EMDB" id="EMD-14202"/>
<dbReference type="EMDB" id="EMD-14204"/>
<dbReference type="EMDB" id="EMD-14210"/>
<dbReference type="EMDB" id="EMD-14211"/>
<dbReference type="EMDB" id="EMD-21691"/>
<dbReference type="EMDB" id="EMD-21696"/>
<dbReference type="EMDB" id="EMD-27018"/>
<dbReference type="EMDB" id="EMD-32272"/>
<dbReference type="EMDB" id="EMD-32273"/>
<dbReference type="EMDB" id="EMD-32274"/>
<dbReference type="EMDB" id="EMD-32275"/>
<dbReference type="EMDB" id="EMD-32276"/>
<dbReference type="EMDB" id="EMD-32277"/>
<dbReference type="EMDB" id="EMD-32278"/>
<dbReference type="EMDB" id="EMD-32279"/>
<dbReference type="EMDB" id="EMD-32280"/>
<dbReference type="EMDB" id="EMD-32281"/>
<dbReference type="EMDB" id="EMD-32282"/>
<dbReference type="EMDB" id="EMD-32283"/>
<dbReference type="EMDB" id="EMD-32284"/>
<dbReference type="EMDB" id="EMD-36598"/>
<dbReference type="EMDB" id="EMD-36605"/>
<dbReference type="EMDB" id="EMD-36645"/>
<dbReference type="EMDB" id="EMD-36764"/>
<dbReference type="EMDB" id="EMD-4089"/>
<dbReference type="EMDB" id="EMD-42506"/>
<dbReference type="EMDB" id="EMD-42507"/>
<dbReference type="EMDB" id="EMD-47719"/>
<dbReference type="EMDB" id="EMD-47720"/>
<dbReference type="EMDB" id="EMD-47721"/>
<dbReference type="EMDB" id="EMD-47722"/>
<dbReference type="EMDB" id="EMD-47723"/>
<dbReference type="EMDB" id="EMD-47724"/>
<dbReference type="EMDB" id="EMD-47725"/>
<dbReference type="EMDB" id="EMD-47726"/>
<dbReference type="EMDB" id="EMD-47727"/>
<dbReference type="EMDB" id="EMD-60138"/>
<dbReference type="EMDB" id="EMD-60139"/>
<dbReference type="EMDB" id="EMD-8663"/>
<dbReference type="EMDB" id="EMD-8664"/>
<dbReference type="EMDB" id="EMD-8665"/>
<dbReference type="EMDB" id="EMD-8666"/>
<dbReference type="EMDB" id="EMD-8667"/>
<dbReference type="EMDB" id="EMD-8668"/>
<dbReference type="EMDB" id="EMD-8672"/>
<dbReference type="EMDB" id="EMD-8674"/>
<dbReference type="EMDB" id="EMD-8675"/>
<dbReference type="EMDB" id="EMD-8676"/>
<dbReference type="EMDB" id="EMD-8677"/>
<dbReference type="EMDB" id="EMD-8678"/>
<dbReference type="EMDB" id="EMD-8679"/>
<dbReference type="EMDB" id="EMD-8680"/>
<dbReference type="EMDB" id="EMD-8681"/>
<dbReference type="EMDB" id="EMD-8682"/>
<dbReference type="EMDB" id="EMD-8683"/>
<dbReference type="EMDB" id="EMD-8684"/>
<dbReference type="EMDB" id="EMD-9216"/>
<dbReference type="EMDB" id="EMD-9217"/>
<dbReference type="EMDB" id="EMD-9218"/>
<dbReference type="EMDB" id="EMD-9219"/>
<dbReference type="EMDB" id="EMD-9220"/>
<dbReference type="EMDB" id="EMD-9221"/>
<dbReference type="EMDB" id="EMD-9222"/>
<dbReference type="EMDB" id="EMD-9512"/>
<dbReference type="SMR" id="P62195"/>
<dbReference type="BioGRID" id="111678">
    <property type="interactions" value="507"/>
</dbReference>
<dbReference type="ComplexPortal" id="CPX-5993">
    <property type="entry name" value="26S proteasome complex"/>
</dbReference>
<dbReference type="ComplexPortal" id="CPX-8964">
    <property type="entry name" value="19S proteasome regulatory complex"/>
</dbReference>
<dbReference type="ComplexPortal" id="CPX-9082">
    <property type="entry name" value="19S-20S-PA28-alphabeta hybrid proteasome complex"/>
</dbReference>
<dbReference type="ComplexPortal" id="CPX-9085">
    <property type="entry name" value="19S-20S-PA28-gamma hybrid proteasome complex"/>
</dbReference>
<dbReference type="ComplexPortal" id="CPX-9086">
    <property type="entry name" value="30S proteasome complex"/>
</dbReference>
<dbReference type="CORUM" id="P62195"/>
<dbReference type="DIP" id="DIP-36645N"/>
<dbReference type="FunCoup" id="P62195">
    <property type="interactions" value="2332"/>
</dbReference>
<dbReference type="IntAct" id="P62195">
    <property type="interactions" value="219"/>
</dbReference>
<dbReference type="MINT" id="P62195"/>
<dbReference type="STRING" id="9606.ENSP00000310572"/>
<dbReference type="ChEMBL" id="CHEMBL2364701"/>
<dbReference type="GlyGen" id="P62195">
    <property type="glycosylation" value="3 sites, 1 N-linked glycan (1 site), 1 O-linked glycan (1 site)"/>
</dbReference>
<dbReference type="iPTMnet" id="P62195"/>
<dbReference type="MetOSite" id="P62195"/>
<dbReference type="PhosphoSitePlus" id="P62195"/>
<dbReference type="SwissPalm" id="P62195"/>
<dbReference type="BioMuta" id="PSMC5"/>
<dbReference type="DMDM" id="49065819"/>
<dbReference type="jPOST" id="P62195"/>
<dbReference type="MassIVE" id="P62195"/>
<dbReference type="PaxDb" id="9606-ENSP00000310572"/>
<dbReference type="PeptideAtlas" id="P62195"/>
<dbReference type="ProteomicsDB" id="1859"/>
<dbReference type="ProteomicsDB" id="57371">
    <molecule id="P62195-1"/>
</dbReference>
<dbReference type="Pumba" id="P62195"/>
<dbReference type="Antibodypedia" id="18742">
    <property type="antibodies" value="317 antibodies from 36 providers"/>
</dbReference>
<dbReference type="DNASU" id="5705"/>
<dbReference type="Ensembl" id="ENST00000310144.11">
    <molecule id="P62195-1"/>
    <property type="protein sequence ID" value="ENSP00000310572.6"/>
    <property type="gene ID" value="ENSG00000087191.14"/>
</dbReference>
<dbReference type="Ensembl" id="ENST00000375812.8">
    <molecule id="P62195-2"/>
    <property type="protein sequence ID" value="ENSP00000364970.4"/>
    <property type="gene ID" value="ENSG00000087191.14"/>
</dbReference>
<dbReference type="Ensembl" id="ENST00000580864.5">
    <molecule id="P62195-2"/>
    <property type="protein sequence ID" value="ENSP00000462495.1"/>
    <property type="gene ID" value="ENSG00000087191.14"/>
</dbReference>
<dbReference type="Ensembl" id="ENST00000581882.5">
    <molecule id="P62195-2"/>
    <property type="protein sequence ID" value="ENSP00000463938.1"/>
    <property type="gene ID" value="ENSG00000087191.14"/>
</dbReference>
<dbReference type="GeneID" id="5705"/>
<dbReference type="KEGG" id="hsa:5705"/>
<dbReference type="MANE-Select" id="ENST00000310144.11">
    <property type="protein sequence ID" value="ENSP00000310572.6"/>
    <property type="RefSeq nucleotide sequence ID" value="NM_002805.6"/>
    <property type="RefSeq protein sequence ID" value="NP_002796.4"/>
</dbReference>
<dbReference type="UCSC" id="uc002jcb.4">
    <molecule id="P62195-1"/>
    <property type="organism name" value="human"/>
</dbReference>
<dbReference type="AGR" id="HGNC:9552"/>
<dbReference type="CTD" id="5705"/>
<dbReference type="DisGeNET" id="5705"/>
<dbReference type="GeneCards" id="PSMC5"/>
<dbReference type="HGNC" id="HGNC:9552">
    <property type="gene designation" value="PSMC5"/>
</dbReference>
<dbReference type="HPA" id="ENSG00000087191">
    <property type="expression patterns" value="Low tissue specificity"/>
</dbReference>
<dbReference type="MIM" id="601681">
    <property type="type" value="gene"/>
</dbReference>
<dbReference type="neXtProt" id="NX_P62195"/>
<dbReference type="OpenTargets" id="ENSG00000087191"/>
<dbReference type="PharmGKB" id="PA33897"/>
<dbReference type="VEuPathDB" id="HostDB:ENSG00000087191"/>
<dbReference type="eggNOG" id="KOG0728">
    <property type="taxonomic scope" value="Eukaryota"/>
</dbReference>
<dbReference type="GeneTree" id="ENSGT01020000230346"/>
<dbReference type="HOGENOM" id="CLU_000688_2_0_1"/>
<dbReference type="InParanoid" id="P62195"/>
<dbReference type="OMA" id="REPAVIF"/>
<dbReference type="OrthoDB" id="1154031at2759"/>
<dbReference type="PAN-GO" id="P62195">
    <property type="GO annotations" value="3 GO annotations based on evolutionary models"/>
</dbReference>
<dbReference type="PhylomeDB" id="P62195"/>
<dbReference type="PathwayCommons" id="P62195"/>
<dbReference type="Reactome" id="R-HSA-1169091">
    <property type="pathway name" value="Activation of NF-kappaB in B cells"/>
</dbReference>
<dbReference type="Reactome" id="R-HSA-1234176">
    <property type="pathway name" value="Oxygen-dependent proline hydroxylation of Hypoxia-inducible Factor Alpha"/>
</dbReference>
<dbReference type="Reactome" id="R-HSA-1236974">
    <property type="pathway name" value="ER-Phagosome pathway"/>
</dbReference>
<dbReference type="Reactome" id="R-HSA-1236978">
    <property type="pathway name" value="Cross-presentation of soluble exogenous antigens (endosomes)"/>
</dbReference>
<dbReference type="Reactome" id="R-HSA-174084">
    <property type="pathway name" value="Autodegradation of Cdh1 by Cdh1:APC/C"/>
</dbReference>
<dbReference type="Reactome" id="R-HSA-174113">
    <property type="pathway name" value="SCF-beta-TrCP mediated degradation of Emi1"/>
</dbReference>
<dbReference type="Reactome" id="R-HSA-174154">
    <property type="pathway name" value="APC/C:Cdc20 mediated degradation of Securin"/>
</dbReference>
<dbReference type="Reactome" id="R-HSA-174178">
    <property type="pathway name" value="APC/C:Cdh1 mediated degradation of Cdc20 and other APC/C:Cdh1 targeted proteins in late mitosis/early G1"/>
</dbReference>
<dbReference type="Reactome" id="R-HSA-174184">
    <property type="pathway name" value="Cdc20:Phospho-APC/C mediated degradation of Cyclin A"/>
</dbReference>
<dbReference type="Reactome" id="R-HSA-180534">
    <property type="pathway name" value="Vpu mediated degradation of CD4"/>
</dbReference>
<dbReference type="Reactome" id="R-HSA-180585">
    <property type="pathway name" value="Vif-mediated degradation of APOBEC3G"/>
</dbReference>
<dbReference type="Reactome" id="R-HSA-187577">
    <property type="pathway name" value="SCF(Skp2)-mediated degradation of p27/p21"/>
</dbReference>
<dbReference type="Reactome" id="R-HSA-195253">
    <property type="pathway name" value="Degradation of beta-catenin by the destruction complex"/>
</dbReference>
<dbReference type="Reactome" id="R-HSA-202424">
    <property type="pathway name" value="Downstream TCR signaling"/>
</dbReference>
<dbReference type="Reactome" id="R-HSA-211733">
    <property type="pathway name" value="Regulation of activated PAK-2p34 by proteasome mediated degradation"/>
</dbReference>
<dbReference type="Reactome" id="R-HSA-2467813">
    <property type="pathway name" value="Separation of Sister Chromatids"/>
</dbReference>
<dbReference type="Reactome" id="R-HSA-2871837">
    <property type="pathway name" value="FCERI mediated NF-kB activation"/>
</dbReference>
<dbReference type="Reactome" id="R-HSA-349425">
    <property type="pathway name" value="Autodegradation of the E3 ubiquitin ligase COP1"/>
</dbReference>
<dbReference type="Reactome" id="R-HSA-350562">
    <property type="pathway name" value="Regulation of ornithine decarboxylase (ODC)"/>
</dbReference>
<dbReference type="Reactome" id="R-HSA-382556">
    <property type="pathway name" value="ABC-family proteins mediated transport"/>
</dbReference>
<dbReference type="Reactome" id="R-HSA-450408">
    <property type="pathway name" value="AUF1 (hnRNP D0) binds and destabilizes mRNA"/>
</dbReference>
<dbReference type="Reactome" id="R-HSA-4608870">
    <property type="pathway name" value="Asymmetric localization of PCP proteins"/>
</dbReference>
<dbReference type="Reactome" id="R-HSA-4641257">
    <property type="pathway name" value="Degradation of AXIN"/>
</dbReference>
<dbReference type="Reactome" id="R-HSA-4641258">
    <property type="pathway name" value="Degradation of DVL"/>
</dbReference>
<dbReference type="Reactome" id="R-HSA-5358346">
    <property type="pathway name" value="Hedgehog ligand biogenesis"/>
</dbReference>
<dbReference type="Reactome" id="R-HSA-5362768">
    <property type="pathway name" value="Hh mutants are degraded by ERAD"/>
</dbReference>
<dbReference type="Reactome" id="R-HSA-5607761">
    <property type="pathway name" value="Dectin-1 mediated noncanonical NF-kB signaling"/>
</dbReference>
<dbReference type="Reactome" id="R-HSA-5607764">
    <property type="pathway name" value="CLEC7A (Dectin-1) signaling"/>
</dbReference>
<dbReference type="Reactome" id="R-HSA-5610780">
    <property type="pathway name" value="Degradation of GLI1 by the proteasome"/>
</dbReference>
<dbReference type="Reactome" id="R-HSA-5610783">
    <property type="pathway name" value="Degradation of GLI2 by the proteasome"/>
</dbReference>
<dbReference type="Reactome" id="R-HSA-5610785">
    <property type="pathway name" value="GLI3 is processed to GLI3R by the proteasome"/>
</dbReference>
<dbReference type="Reactome" id="R-HSA-5632684">
    <property type="pathway name" value="Hedgehog 'on' state"/>
</dbReference>
<dbReference type="Reactome" id="R-HSA-5658442">
    <property type="pathway name" value="Regulation of RAS by GAPs"/>
</dbReference>
<dbReference type="Reactome" id="R-HSA-5668541">
    <property type="pathway name" value="TNFR2 non-canonical NF-kB pathway"/>
</dbReference>
<dbReference type="Reactome" id="R-HSA-5676590">
    <property type="pathway name" value="NIK--&gt;noncanonical NF-kB signaling"/>
</dbReference>
<dbReference type="Reactome" id="R-HSA-5678895">
    <property type="pathway name" value="Defective CFTR causes cystic fibrosis"/>
</dbReference>
<dbReference type="Reactome" id="R-HSA-5687128">
    <property type="pathway name" value="MAPK6/MAPK4 signaling"/>
</dbReference>
<dbReference type="Reactome" id="R-HSA-5689603">
    <property type="pathway name" value="UCH proteinases"/>
</dbReference>
<dbReference type="Reactome" id="R-HSA-5689880">
    <property type="pathway name" value="Ub-specific processing proteases"/>
</dbReference>
<dbReference type="Reactome" id="R-HSA-68867">
    <property type="pathway name" value="Assembly of the pre-replicative complex"/>
</dbReference>
<dbReference type="Reactome" id="R-HSA-68949">
    <property type="pathway name" value="Orc1 removal from chromatin"/>
</dbReference>
<dbReference type="Reactome" id="R-HSA-69017">
    <property type="pathway name" value="CDK-mediated phosphorylation and removal of Cdc6"/>
</dbReference>
<dbReference type="Reactome" id="R-HSA-69481">
    <property type="pathway name" value="G2/M Checkpoints"/>
</dbReference>
<dbReference type="Reactome" id="R-HSA-69601">
    <property type="pathway name" value="Ubiquitin Mediated Degradation of Phosphorylated Cdc25A"/>
</dbReference>
<dbReference type="Reactome" id="R-HSA-75815">
    <property type="pathway name" value="Ubiquitin-dependent degradation of Cyclin D"/>
</dbReference>
<dbReference type="Reactome" id="R-HSA-8852276">
    <property type="pathway name" value="The role of GTSE1 in G2/M progression after G2 checkpoint"/>
</dbReference>
<dbReference type="Reactome" id="R-HSA-8854050">
    <property type="pathway name" value="FBXL7 down-regulates AURKA during mitotic entry and in early mitosis"/>
</dbReference>
<dbReference type="Reactome" id="R-HSA-8939236">
    <property type="pathway name" value="RUNX1 regulates transcription of genes involved in differentiation of HSCs"/>
</dbReference>
<dbReference type="Reactome" id="R-HSA-8939902">
    <property type="pathway name" value="Regulation of RUNX2 expression and activity"/>
</dbReference>
<dbReference type="Reactome" id="R-HSA-8941858">
    <property type="pathway name" value="Regulation of RUNX3 expression and activity"/>
</dbReference>
<dbReference type="Reactome" id="R-HSA-8948751">
    <property type="pathway name" value="Regulation of PTEN stability and activity"/>
</dbReference>
<dbReference type="Reactome" id="R-HSA-8951664">
    <property type="pathway name" value="Neddylation"/>
</dbReference>
<dbReference type="Reactome" id="R-HSA-9010553">
    <property type="pathway name" value="Regulation of expression of SLITs and ROBOs"/>
</dbReference>
<dbReference type="Reactome" id="R-HSA-9020702">
    <property type="pathway name" value="Interleukin-1 signaling"/>
</dbReference>
<dbReference type="Reactome" id="R-HSA-9604323">
    <property type="pathway name" value="Negative regulation of NOTCH4 signaling"/>
</dbReference>
<dbReference type="Reactome" id="R-HSA-9755511">
    <property type="pathway name" value="KEAP1-NFE2L2 pathway"/>
</dbReference>
<dbReference type="Reactome" id="R-HSA-9762114">
    <property type="pathway name" value="GSK3B and BTRC:CUL1-mediated-degradation of NFE2L2"/>
</dbReference>
<dbReference type="Reactome" id="R-HSA-9824272">
    <property type="pathway name" value="Somitogenesis"/>
</dbReference>
<dbReference type="Reactome" id="R-HSA-983168">
    <property type="pathway name" value="Antigen processing: Ubiquitination &amp; Proteasome degradation"/>
</dbReference>
<dbReference type="Reactome" id="R-HSA-9907900">
    <property type="pathway name" value="Proteasome assembly"/>
</dbReference>
<dbReference type="SignaLink" id="P62195"/>
<dbReference type="SIGNOR" id="P62195"/>
<dbReference type="BioGRID-ORCS" id="5705">
    <property type="hits" value="632 hits in 1133 CRISPR screens"/>
</dbReference>
<dbReference type="CD-CODE" id="8C2F96ED">
    <property type="entry name" value="Centrosome"/>
</dbReference>
<dbReference type="ChiTaRS" id="PSMC5">
    <property type="organism name" value="human"/>
</dbReference>
<dbReference type="EvolutionaryTrace" id="P62195"/>
<dbReference type="GeneWiki" id="PSMC5"/>
<dbReference type="GenomeRNAi" id="5705"/>
<dbReference type="Pharos" id="P62195">
    <property type="development level" value="Tbio"/>
</dbReference>
<dbReference type="PRO" id="PR:P62195"/>
<dbReference type="Proteomes" id="UP000005640">
    <property type="component" value="Chromosome 17"/>
</dbReference>
<dbReference type="RNAct" id="P62195">
    <property type="molecule type" value="protein"/>
</dbReference>
<dbReference type="Bgee" id="ENSG00000087191">
    <property type="expression patterns" value="Expressed in tendon of biceps brachii and 215 other cell types or tissues"/>
</dbReference>
<dbReference type="ExpressionAtlas" id="P62195">
    <property type="expression patterns" value="baseline and differential"/>
</dbReference>
<dbReference type="GO" id="GO:0072562">
    <property type="term" value="C:blood microparticle"/>
    <property type="evidence" value="ECO:0007005"/>
    <property type="project" value="UniProtKB"/>
</dbReference>
<dbReference type="GO" id="GO:0005737">
    <property type="term" value="C:cytoplasm"/>
    <property type="evidence" value="ECO:0000314"/>
    <property type="project" value="UniProtKB"/>
</dbReference>
<dbReference type="GO" id="GO:0031410">
    <property type="term" value="C:cytoplasmic vesicle"/>
    <property type="evidence" value="ECO:0000314"/>
    <property type="project" value="UniProtKB"/>
</dbReference>
<dbReference type="GO" id="GO:0005829">
    <property type="term" value="C:cytosol"/>
    <property type="evidence" value="ECO:0000304"/>
    <property type="project" value="Reactome"/>
</dbReference>
<dbReference type="GO" id="GO:0031597">
    <property type="term" value="C:cytosolic proteasome complex"/>
    <property type="evidence" value="ECO:0007669"/>
    <property type="project" value="Ensembl"/>
</dbReference>
<dbReference type="GO" id="GO:0070062">
    <property type="term" value="C:extracellular exosome"/>
    <property type="evidence" value="ECO:0007005"/>
    <property type="project" value="UniProtKB"/>
</dbReference>
<dbReference type="GO" id="GO:0016234">
    <property type="term" value="C:inclusion body"/>
    <property type="evidence" value="ECO:0007669"/>
    <property type="project" value="Ensembl"/>
</dbReference>
<dbReference type="GO" id="GO:0016020">
    <property type="term" value="C:membrane"/>
    <property type="evidence" value="ECO:0007005"/>
    <property type="project" value="UniProtKB"/>
</dbReference>
<dbReference type="GO" id="GO:0031595">
    <property type="term" value="C:nuclear proteasome complex"/>
    <property type="evidence" value="ECO:0007669"/>
    <property type="project" value="Ensembl"/>
</dbReference>
<dbReference type="GO" id="GO:0005654">
    <property type="term" value="C:nucleoplasm"/>
    <property type="evidence" value="ECO:0000304"/>
    <property type="project" value="Reactome"/>
</dbReference>
<dbReference type="GO" id="GO:0005634">
    <property type="term" value="C:nucleus"/>
    <property type="evidence" value="ECO:0000314"/>
    <property type="project" value="UniProtKB"/>
</dbReference>
<dbReference type="GO" id="GO:0022624">
    <property type="term" value="C:proteasome accessory complex"/>
    <property type="evidence" value="ECO:0000250"/>
    <property type="project" value="UniProtKB"/>
</dbReference>
<dbReference type="GO" id="GO:0000502">
    <property type="term" value="C:proteasome complex"/>
    <property type="evidence" value="ECO:0000314"/>
    <property type="project" value="UniProtKB"/>
</dbReference>
<dbReference type="GO" id="GO:0008540">
    <property type="term" value="C:proteasome regulatory particle, base subcomplex"/>
    <property type="evidence" value="ECO:0000318"/>
    <property type="project" value="GO_Central"/>
</dbReference>
<dbReference type="GO" id="GO:0005524">
    <property type="term" value="F:ATP binding"/>
    <property type="evidence" value="ECO:0007669"/>
    <property type="project" value="UniProtKB-KW"/>
</dbReference>
<dbReference type="GO" id="GO:0016887">
    <property type="term" value="F:ATP hydrolysis activity"/>
    <property type="evidence" value="ECO:0007669"/>
    <property type="project" value="Ensembl"/>
</dbReference>
<dbReference type="GO" id="GO:0140297">
    <property type="term" value="F:DNA-binding transcription factor binding"/>
    <property type="evidence" value="ECO:0000353"/>
    <property type="project" value="UniProtKB"/>
</dbReference>
<dbReference type="GO" id="GO:0140296">
    <property type="term" value="F:general transcription initiation factor binding"/>
    <property type="evidence" value="ECO:0000353"/>
    <property type="project" value="UniProtKB"/>
</dbReference>
<dbReference type="GO" id="GO:0036402">
    <property type="term" value="F:proteasome-activating activity"/>
    <property type="evidence" value="ECO:0000250"/>
    <property type="project" value="UniProtKB"/>
</dbReference>
<dbReference type="GO" id="GO:0017025">
    <property type="term" value="F:TBP-class protein binding"/>
    <property type="evidence" value="ECO:0007669"/>
    <property type="project" value="Ensembl"/>
</dbReference>
<dbReference type="GO" id="GO:0031531">
    <property type="term" value="F:thyrotropin-releasing hormone receptor binding"/>
    <property type="evidence" value="ECO:0000353"/>
    <property type="project" value="UniProtKB"/>
</dbReference>
<dbReference type="GO" id="GO:0008134">
    <property type="term" value="F:transcription factor binding"/>
    <property type="evidence" value="ECO:0000314"/>
    <property type="project" value="GO_Central"/>
</dbReference>
<dbReference type="GO" id="GO:0045892">
    <property type="term" value="P:negative regulation of DNA-templated transcription"/>
    <property type="evidence" value="ECO:0007669"/>
    <property type="project" value="Ensembl"/>
</dbReference>
<dbReference type="GO" id="GO:0043069">
    <property type="term" value="P:negative regulation of programmed cell death"/>
    <property type="evidence" value="ECO:0000303"/>
    <property type="project" value="UniProtKB"/>
</dbReference>
<dbReference type="GO" id="GO:0045893">
    <property type="term" value="P:positive regulation of DNA-templated transcription"/>
    <property type="evidence" value="ECO:0000303"/>
    <property type="project" value="UniProtKB"/>
</dbReference>
<dbReference type="GO" id="GO:0090261">
    <property type="term" value="P:positive regulation of inclusion body assembly"/>
    <property type="evidence" value="ECO:0007669"/>
    <property type="project" value="Ensembl"/>
</dbReference>
<dbReference type="GO" id="GO:1901800">
    <property type="term" value="P:positive regulation of proteasomal protein catabolic process"/>
    <property type="evidence" value="ECO:0000305"/>
    <property type="project" value="UniProtKB"/>
</dbReference>
<dbReference type="GO" id="GO:0043161">
    <property type="term" value="P:proteasome-mediated ubiquitin-dependent protein catabolic process"/>
    <property type="evidence" value="ECO:0000314"/>
    <property type="project" value="UniProtKB"/>
</dbReference>
<dbReference type="GO" id="GO:0006357">
    <property type="term" value="P:regulation of transcription by RNA polymerase II"/>
    <property type="evidence" value="ECO:0000314"/>
    <property type="project" value="GO_Central"/>
</dbReference>
<dbReference type="CDD" id="cd19502">
    <property type="entry name" value="RecA-like_PAN_like"/>
    <property type="match status" value="1"/>
</dbReference>
<dbReference type="FunFam" id="1.10.8.60:FF:000006">
    <property type="entry name" value="26S protease regulatory subunit 8"/>
    <property type="match status" value="1"/>
</dbReference>
<dbReference type="FunFam" id="2.40.50.140:FF:000044">
    <property type="entry name" value="26S protease regulatory subunit 8"/>
    <property type="match status" value="1"/>
</dbReference>
<dbReference type="FunFam" id="3.40.50.300:FF:000030">
    <property type="entry name" value="26S protease regulatory subunit 8"/>
    <property type="match status" value="1"/>
</dbReference>
<dbReference type="Gene3D" id="1.10.8.60">
    <property type="match status" value="1"/>
</dbReference>
<dbReference type="Gene3D" id="2.40.50.140">
    <property type="entry name" value="Nucleic acid-binding proteins"/>
    <property type="match status" value="1"/>
</dbReference>
<dbReference type="Gene3D" id="3.40.50.300">
    <property type="entry name" value="P-loop containing nucleotide triphosphate hydrolases"/>
    <property type="match status" value="1"/>
</dbReference>
<dbReference type="InterPro" id="IPR050221">
    <property type="entry name" value="26S_Proteasome_ATPase"/>
</dbReference>
<dbReference type="InterPro" id="IPR003593">
    <property type="entry name" value="AAA+_ATPase"/>
</dbReference>
<dbReference type="InterPro" id="IPR041569">
    <property type="entry name" value="AAA_lid_3"/>
</dbReference>
<dbReference type="InterPro" id="IPR003959">
    <property type="entry name" value="ATPase_AAA_core"/>
</dbReference>
<dbReference type="InterPro" id="IPR003960">
    <property type="entry name" value="ATPase_AAA_CS"/>
</dbReference>
<dbReference type="InterPro" id="IPR012340">
    <property type="entry name" value="NA-bd_OB-fold"/>
</dbReference>
<dbReference type="InterPro" id="IPR027417">
    <property type="entry name" value="P-loop_NTPase"/>
</dbReference>
<dbReference type="InterPro" id="IPR032501">
    <property type="entry name" value="Prot_ATP_ID_OB_2nd"/>
</dbReference>
<dbReference type="PANTHER" id="PTHR23073">
    <property type="entry name" value="26S PROTEASOME REGULATORY SUBUNIT"/>
    <property type="match status" value="1"/>
</dbReference>
<dbReference type="Pfam" id="PF00004">
    <property type="entry name" value="AAA"/>
    <property type="match status" value="1"/>
</dbReference>
<dbReference type="Pfam" id="PF17862">
    <property type="entry name" value="AAA_lid_3"/>
    <property type="match status" value="1"/>
</dbReference>
<dbReference type="Pfam" id="PF16450">
    <property type="entry name" value="Prot_ATP_ID_OB_C"/>
    <property type="match status" value="1"/>
</dbReference>
<dbReference type="SMART" id="SM00382">
    <property type="entry name" value="AAA"/>
    <property type="match status" value="1"/>
</dbReference>
<dbReference type="SUPFAM" id="SSF52540">
    <property type="entry name" value="P-loop containing nucleoside triphosphate hydrolases"/>
    <property type="match status" value="1"/>
</dbReference>
<dbReference type="PROSITE" id="PS00674">
    <property type="entry name" value="AAA"/>
    <property type="match status" value="1"/>
</dbReference>
<accession>P62195</accession>
<accession>A8K3Z3</accession>
<accession>A8K763</accession>
<accession>O35051</accession>
<accession>O43208</accession>
<accession>P47210</accession>
<accession>P52915</accession>
<accession>P52916</accession>
<feature type="initiator methionine" description="Removed" evidence="9 16 18 19">
    <location>
        <position position="1"/>
    </location>
</feature>
<feature type="chain" id="PRO_0000084721" description="26S proteasome regulatory subunit 8">
    <location>
        <begin position="2"/>
        <end position="406"/>
    </location>
</feature>
<feature type="region of interest" description="May mediate interaction with PRPF9" evidence="1">
    <location>
        <begin position="186"/>
        <end position="406"/>
    </location>
</feature>
<feature type="binding site" evidence="2">
    <location>
        <begin position="190"/>
        <end position="197"/>
    </location>
    <ligand>
        <name>ATP</name>
        <dbReference type="ChEBI" id="CHEBI:30616"/>
    </ligand>
</feature>
<feature type="modified residue" description="N-acetylalanine" evidence="9 16 18 19">
    <location>
        <position position="2"/>
    </location>
</feature>
<feature type="modified residue" description="Phosphoserine" evidence="20">
    <location>
        <position position="120"/>
    </location>
</feature>
<feature type="modified residue" description="N6-acetyllysine" evidence="17">
    <location>
        <position position="222"/>
    </location>
</feature>
<feature type="splice variant" id="VSP_045441" description="In isoform 2." evidence="14">
    <location>
        <begin position="1"/>
        <end position="8"/>
    </location>
</feature>
<feature type="sequence variant" id="VAR_035901" description="In a colorectal cancer sample; somatic mutation." evidence="6">
    <original>R</original>
    <variation>Q</variation>
    <location>
        <position position="60"/>
    </location>
</feature>
<feature type="sequence variant" id="VAR_048119" description="In dbSNP:rs11543211.">
    <original>R</original>
    <variation>W</variation>
    <location>
        <position position="258"/>
    </location>
</feature>
<feature type="sequence conflict" description="In Ref. 1; BAA07919." evidence="15" ref="1">
    <original>E</original>
    <variation>R</variation>
    <location>
        <position position="61"/>
    </location>
</feature>
<feature type="sequence conflict" description="In Ref. 6; AAB88187." evidence="15" ref="6">
    <original>LP</original>
    <variation>ML</variation>
    <location>
        <begin position="127"/>
        <end position="128"/>
    </location>
</feature>
<feature type="sequence conflict" description="In Ref. 2; AAC41735." evidence="15" ref="2">
    <original>D</original>
    <variation>S</variation>
    <location>
        <position position="266"/>
    </location>
</feature>
<feature type="sequence conflict" description="In Ref. 2; AAC41735." evidence="15" ref="2">
    <original>T</original>
    <variation>Q</variation>
    <location>
        <position position="272"/>
    </location>
</feature>
<feature type="sequence conflict" description="In Ref. 2; AAC41735." evidence="15" ref="2">
    <original>I</original>
    <variation>M</variation>
    <location>
        <position position="300"/>
    </location>
</feature>
<feature type="helix" evidence="22">
    <location>
        <begin position="22"/>
        <end position="65"/>
    </location>
</feature>
<feature type="strand" evidence="22">
    <location>
        <begin position="71"/>
        <end position="79"/>
    </location>
</feature>
<feature type="strand" evidence="22">
    <location>
        <begin position="81"/>
        <end position="83"/>
    </location>
</feature>
<feature type="strand" evidence="22">
    <location>
        <begin position="85"/>
        <end position="92"/>
    </location>
</feature>
<feature type="strand" evidence="22">
    <location>
        <begin position="94"/>
        <end position="97"/>
    </location>
</feature>
<feature type="helix" evidence="22">
    <location>
        <begin position="105"/>
        <end position="107"/>
    </location>
</feature>
<feature type="turn" evidence="22">
    <location>
        <begin position="118"/>
        <end position="120"/>
    </location>
</feature>
<feature type="strand" evidence="22">
    <location>
        <begin position="133"/>
        <end position="136"/>
    </location>
</feature>
<feature type="helix" evidence="22">
    <location>
        <begin position="148"/>
        <end position="150"/>
    </location>
</feature>
<feature type="helix" evidence="22">
    <location>
        <begin position="155"/>
        <end position="162"/>
    </location>
</feature>
<feature type="turn" evidence="22">
    <location>
        <begin position="163"/>
        <end position="166"/>
    </location>
</feature>
<feature type="helix" evidence="22">
    <location>
        <begin position="167"/>
        <end position="170"/>
    </location>
</feature>
<feature type="helix" evidence="22">
    <location>
        <begin position="173"/>
        <end position="178"/>
    </location>
</feature>
<feature type="strand" evidence="22">
    <location>
        <begin position="191"/>
        <end position="195"/>
    </location>
</feature>
<feature type="helix" evidence="22">
    <location>
        <begin position="198"/>
        <end position="205"/>
    </location>
</feature>
<feature type="strand" evidence="22">
    <location>
        <begin position="209"/>
        <end position="213"/>
    </location>
</feature>
<feature type="turn" evidence="22">
    <location>
        <begin position="224"/>
        <end position="226"/>
    </location>
</feature>
<feature type="helix" evidence="22">
    <location>
        <begin position="227"/>
        <end position="237"/>
    </location>
</feature>
<feature type="turn" evidence="22">
    <location>
        <begin position="238"/>
        <end position="241"/>
    </location>
</feature>
<feature type="strand" evidence="22">
    <location>
        <begin position="243"/>
        <end position="247"/>
    </location>
</feature>
<feature type="turn" evidence="22">
    <location>
        <begin position="251"/>
        <end position="254"/>
    </location>
</feature>
<feature type="strand" evidence="22">
    <location>
        <begin position="262"/>
        <end position="265"/>
    </location>
</feature>
<feature type="helix" evidence="22">
    <location>
        <begin position="268"/>
        <end position="280"/>
    </location>
</feature>
<feature type="strand" evidence="22">
    <location>
        <begin position="281"/>
        <end position="284"/>
    </location>
</feature>
<feature type="strand" evidence="22">
    <location>
        <begin position="287"/>
        <end position="291"/>
    </location>
</feature>
<feature type="strand" evidence="22">
    <location>
        <begin position="298"/>
        <end position="301"/>
    </location>
</feature>
<feature type="turn" evidence="22">
    <location>
        <begin position="303"/>
        <end position="306"/>
    </location>
</feature>
<feature type="turn" evidence="22">
    <location>
        <begin position="308"/>
        <end position="310"/>
    </location>
</feature>
<feature type="helix" evidence="21">
    <location>
        <begin position="322"/>
        <end position="333"/>
    </location>
</feature>
<feature type="strand" evidence="21">
    <location>
        <begin position="336"/>
        <end position="338"/>
    </location>
</feature>
<feature type="helix" evidence="21">
    <location>
        <begin position="344"/>
        <end position="349"/>
    </location>
</feature>
<feature type="helix" evidence="21">
    <location>
        <begin position="356"/>
        <end position="372"/>
    </location>
</feature>
<feature type="strand" evidence="21">
    <location>
        <begin position="376"/>
        <end position="378"/>
    </location>
</feature>
<feature type="helix" evidence="21">
    <location>
        <begin position="380"/>
        <end position="391"/>
    </location>
</feature>
<feature type="helix" evidence="22">
    <location>
        <begin position="399"/>
        <end position="402"/>
    </location>
</feature>
<feature type="modified residue" description="N-acetylmethionine" evidence="19">
    <location sequence="P62195-2">
        <position position="1"/>
    </location>
</feature>
<name>PRS8_HUMAN</name>
<organism>
    <name type="scientific">Homo sapiens</name>
    <name type="common">Human</name>
    <dbReference type="NCBI Taxonomy" id="9606"/>
    <lineage>
        <taxon>Eukaryota</taxon>
        <taxon>Metazoa</taxon>
        <taxon>Chordata</taxon>
        <taxon>Craniata</taxon>
        <taxon>Vertebrata</taxon>
        <taxon>Euteleostomi</taxon>
        <taxon>Mammalia</taxon>
        <taxon>Eutheria</taxon>
        <taxon>Euarchontoglires</taxon>
        <taxon>Primates</taxon>
        <taxon>Haplorrhini</taxon>
        <taxon>Catarrhini</taxon>
        <taxon>Hominidae</taxon>
        <taxon>Homo</taxon>
    </lineage>
</organism>
<protein>
    <recommendedName>
        <fullName>26S proteasome regulatory subunit 8</fullName>
    </recommendedName>
    <alternativeName>
        <fullName>26S proteasome AAA-ATPase subunit RPT6</fullName>
    </alternativeName>
    <alternativeName>
        <fullName>Proteasome 26S subunit ATPase 5</fullName>
    </alternativeName>
    <alternativeName>
        <fullName>Proteasome subunit p45</fullName>
    </alternativeName>
    <alternativeName>
        <fullName>Thyroid hormone receptor-interacting protein 1</fullName>
        <shortName>TRIP1</shortName>
    </alternativeName>
    <alternativeName>
        <fullName>p45/SUG</fullName>
    </alternativeName>
</protein>
<evidence type="ECO:0000250" key="1">
    <source>
        <dbReference type="UniProtKB" id="P62196"/>
    </source>
</evidence>
<evidence type="ECO:0000255" key="2"/>
<evidence type="ECO:0000269" key="3">
    <source>
    </source>
</evidence>
<evidence type="ECO:0000269" key="4">
    <source>
    </source>
</evidence>
<evidence type="ECO:0000269" key="5">
    <source>
    </source>
</evidence>
<evidence type="ECO:0000269" key="6">
    <source>
    </source>
</evidence>
<evidence type="ECO:0000269" key="7">
    <source>
    </source>
</evidence>
<evidence type="ECO:0000269" key="8">
    <source>
    </source>
</evidence>
<evidence type="ECO:0000269" key="9">
    <source>
    </source>
</evidence>
<evidence type="ECO:0000269" key="10">
    <source>
    </source>
</evidence>
<evidence type="ECO:0000269" key="11">
    <source>
    </source>
</evidence>
<evidence type="ECO:0000269" key="12">
    <source>
    </source>
</evidence>
<evidence type="ECO:0000269" key="13">
    <source>
    </source>
</evidence>
<evidence type="ECO:0000303" key="14">
    <source>
    </source>
</evidence>
<evidence type="ECO:0000305" key="15"/>
<evidence type="ECO:0007744" key="16">
    <source>
    </source>
</evidence>
<evidence type="ECO:0007744" key="17">
    <source>
    </source>
</evidence>
<evidence type="ECO:0007744" key="18">
    <source>
    </source>
</evidence>
<evidence type="ECO:0007744" key="19">
    <source>
    </source>
</evidence>
<evidence type="ECO:0007744" key="20">
    <source>
    </source>
</evidence>
<evidence type="ECO:0007829" key="21">
    <source>
        <dbReference type="PDB" id="3KW6"/>
    </source>
</evidence>
<evidence type="ECO:0007829" key="22">
    <source>
        <dbReference type="PDB" id="9E8J"/>
    </source>
</evidence>
<reference key="1">
    <citation type="journal article" date="1995" name="FEBS Lett.">
        <title>cDNA cloning of a new putative ATPase subunit p45 of the human 26S proteasome, a homolog of yeast transcriptional factor Sug1p.</title>
        <authorList>
            <person name="Akiyama K."/>
            <person name="Yokota K."/>
            <person name="Kagawa S."/>
            <person name="Shimbara N."/>
            <person name="Demartino G.N."/>
            <person name="Slaughter C.A."/>
            <person name="Noda C."/>
            <person name="Tanaka K."/>
        </authorList>
    </citation>
    <scope>NUCLEOTIDE SEQUENCE [MRNA] (ISOFORM 1)</scope>
    <source>
        <tissue>Hepatoma</tissue>
    </source>
</reference>
<reference key="2">
    <citation type="journal article" date="1995" name="Mol. Endocrinol.">
        <title>Two classes of proteins dependent on either the presence or absence of thyroid hormone for interaction with the thyroid hormone receptor.</title>
        <authorList>
            <person name="Lee J.W."/>
            <person name="Choi H.-S."/>
            <person name="Gyuris J."/>
            <person name="Brent R."/>
            <person name="Moore D.D."/>
        </authorList>
    </citation>
    <scope>NUCLEOTIDE SEQUENCE [MRNA] (ISOFORM 1)</scope>
</reference>
<reference key="3">
    <citation type="journal article" date="2004" name="Nat. Genet.">
        <title>Complete sequencing and characterization of 21,243 full-length human cDNAs.</title>
        <authorList>
            <person name="Ota T."/>
            <person name="Suzuki Y."/>
            <person name="Nishikawa T."/>
            <person name="Otsuki T."/>
            <person name="Sugiyama T."/>
            <person name="Irie R."/>
            <person name="Wakamatsu A."/>
            <person name="Hayashi K."/>
            <person name="Sato H."/>
            <person name="Nagai K."/>
            <person name="Kimura K."/>
            <person name="Makita H."/>
            <person name="Sekine M."/>
            <person name="Obayashi M."/>
            <person name="Nishi T."/>
            <person name="Shibahara T."/>
            <person name="Tanaka T."/>
            <person name="Ishii S."/>
            <person name="Yamamoto J."/>
            <person name="Saito K."/>
            <person name="Kawai Y."/>
            <person name="Isono Y."/>
            <person name="Nakamura Y."/>
            <person name="Nagahari K."/>
            <person name="Murakami K."/>
            <person name="Yasuda T."/>
            <person name="Iwayanagi T."/>
            <person name="Wagatsuma M."/>
            <person name="Shiratori A."/>
            <person name="Sudo H."/>
            <person name="Hosoiri T."/>
            <person name="Kaku Y."/>
            <person name="Kodaira H."/>
            <person name="Kondo H."/>
            <person name="Sugawara M."/>
            <person name="Takahashi M."/>
            <person name="Kanda K."/>
            <person name="Yokoi T."/>
            <person name="Furuya T."/>
            <person name="Kikkawa E."/>
            <person name="Omura Y."/>
            <person name="Abe K."/>
            <person name="Kamihara K."/>
            <person name="Katsuta N."/>
            <person name="Sato K."/>
            <person name="Tanikawa M."/>
            <person name="Yamazaki M."/>
            <person name="Ninomiya K."/>
            <person name="Ishibashi T."/>
            <person name="Yamashita H."/>
            <person name="Murakawa K."/>
            <person name="Fujimori K."/>
            <person name="Tanai H."/>
            <person name="Kimata M."/>
            <person name="Watanabe M."/>
            <person name="Hiraoka S."/>
            <person name="Chiba Y."/>
            <person name="Ishida S."/>
            <person name="Ono Y."/>
            <person name="Takiguchi S."/>
            <person name="Watanabe S."/>
            <person name="Yosida M."/>
            <person name="Hotuta T."/>
            <person name="Kusano J."/>
            <person name="Kanehori K."/>
            <person name="Takahashi-Fujii A."/>
            <person name="Hara H."/>
            <person name="Tanase T.-O."/>
            <person name="Nomura Y."/>
            <person name="Togiya S."/>
            <person name="Komai F."/>
            <person name="Hara R."/>
            <person name="Takeuchi K."/>
            <person name="Arita M."/>
            <person name="Imose N."/>
            <person name="Musashino K."/>
            <person name="Yuuki H."/>
            <person name="Oshima A."/>
            <person name="Sasaki N."/>
            <person name="Aotsuka S."/>
            <person name="Yoshikawa Y."/>
            <person name="Matsunawa H."/>
            <person name="Ichihara T."/>
            <person name="Shiohata N."/>
            <person name="Sano S."/>
            <person name="Moriya S."/>
            <person name="Momiyama H."/>
            <person name="Satoh N."/>
            <person name="Takami S."/>
            <person name="Terashima Y."/>
            <person name="Suzuki O."/>
            <person name="Nakagawa S."/>
            <person name="Senoh A."/>
            <person name="Mizoguchi H."/>
            <person name="Goto Y."/>
            <person name="Shimizu F."/>
            <person name="Wakebe H."/>
            <person name="Hishigaki H."/>
            <person name="Watanabe T."/>
            <person name="Sugiyama A."/>
            <person name="Takemoto M."/>
            <person name="Kawakami B."/>
            <person name="Yamazaki M."/>
            <person name="Watanabe K."/>
            <person name="Kumagai A."/>
            <person name="Itakura S."/>
            <person name="Fukuzumi Y."/>
            <person name="Fujimori Y."/>
            <person name="Komiyama M."/>
            <person name="Tashiro H."/>
            <person name="Tanigami A."/>
            <person name="Fujiwara T."/>
            <person name="Ono T."/>
            <person name="Yamada K."/>
            <person name="Fujii Y."/>
            <person name="Ozaki K."/>
            <person name="Hirao M."/>
            <person name="Ohmori Y."/>
            <person name="Kawabata A."/>
            <person name="Hikiji T."/>
            <person name="Kobatake N."/>
            <person name="Inagaki H."/>
            <person name="Ikema Y."/>
            <person name="Okamoto S."/>
            <person name="Okitani R."/>
            <person name="Kawakami T."/>
            <person name="Noguchi S."/>
            <person name="Itoh T."/>
            <person name="Shigeta K."/>
            <person name="Senba T."/>
            <person name="Matsumura K."/>
            <person name="Nakajima Y."/>
            <person name="Mizuno T."/>
            <person name="Morinaga M."/>
            <person name="Sasaki M."/>
            <person name="Togashi T."/>
            <person name="Oyama M."/>
            <person name="Hata H."/>
            <person name="Watanabe M."/>
            <person name="Komatsu T."/>
            <person name="Mizushima-Sugano J."/>
            <person name="Satoh T."/>
            <person name="Shirai Y."/>
            <person name="Takahashi Y."/>
            <person name="Nakagawa K."/>
            <person name="Okumura K."/>
            <person name="Nagase T."/>
            <person name="Nomura N."/>
            <person name="Kikuchi H."/>
            <person name="Masuho Y."/>
            <person name="Yamashita R."/>
            <person name="Nakai K."/>
            <person name="Yada T."/>
            <person name="Nakamura Y."/>
            <person name="Ohara O."/>
            <person name="Isogai T."/>
            <person name="Sugano S."/>
        </authorList>
    </citation>
    <scope>NUCLEOTIDE SEQUENCE [LARGE SCALE MRNA] (ISOFORMS 1 AND 2)</scope>
    <source>
        <tissue>Skeletal muscle</tissue>
    </source>
</reference>
<reference key="4">
    <citation type="submission" date="2005-09" db="EMBL/GenBank/DDBJ databases">
        <authorList>
            <person name="Mural R.J."/>
            <person name="Istrail S."/>
            <person name="Sutton G.G."/>
            <person name="Florea L."/>
            <person name="Halpern A.L."/>
            <person name="Mobarry C.M."/>
            <person name="Lippert R."/>
            <person name="Walenz B."/>
            <person name="Shatkay H."/>
            <person name="Dew I."/>
            <person name="Miller J.R."/>
            <person name="Flanigan M.J."/>
            <person name="Edwards N.J."/>
            <person name="Bolanos R."/>
            <person name="Fasulo D."/>
            <person name="Halldorsson B.V."/>
            <person name="Hannenhalli S."/>
            <person name="Turner R."/>
            <person name="Yooseph S."/>
            <person name="Lu F."/>
            <person name="Nusskern D.R."/>
            <person name="Shue B.C."/>
            <person name="Zheng X.H."/>
            <person name="Zhong F."/>
            <person name="Delcher A.L."/>
            <person name="Huson D.H."/>
            <person name="Kravitz S.A."/>
            <person name="Mouchard L."/>
            <person name="Reinert K."/>
            <person name="Remington K.A."/>
            <person name="Clark A.G."/>
            <person name="Waterman M.S."/>
            <person name="Eichler E.E."/>
            <person name="Adams M.D."/>
            <person name="Hunkapiller M.W."/>
            <person name="Myers E.W."/>
            <person name="Venter J.C."/>
        </authorList>
    </citation>
    <scope>NUCLEOTIDE SEQUENCE [LARGE SCALE GENOMIC DNA]</scope>
</reference>
<reference key="5">
    <citation type="journal article" date="2004" name="Genome Res.">
        <title>The status, quality, and expansion of the NIH full-length cDNA project: the Mammalian Gene Collection (MGC).</title>
        <authorList>
            <consortium name="The MGC Project Team"/>
        </authorList>
    </citation>
    <scope>NUCLEOTIDE SEQUENCE [LARGE SCALE MRNA] (ISOFORM 1)</scope>
    <source>
        <tissue>Lung carcinoma</tissue>
    </source>
</reference>
<reference key="6">
    <citation type="journal article" date="1997" name="Genome Res.">
        <title>Large-scale concatenation cDNA sequencing.</title>
        <authorList>
            <person name="Yu W."/>
            <person name="Andersson B."/>
            <person name="Worley K.C."/>
            <person name="Muzny D.M."/>
            <person name="Ding Y."/>
            <person name="Liu W."/>
            <person name="Ricafrente J.Y."/>
            <person name="Wentland M.A."/>
            <person name="Lennon G."/>
            <person name="Gibbs R.A."/>
        </authorList>
    </citation>
    <scope>NUCLEOTIDE SEQUENCE [LARGE SCALE MRNA] OF 127-406</scope>
    <source>
        <tissue>Brain</tissue>
    </source>
</reference>
<reference key="7">
    <citation type="journal article" date="1992" name="Eur. J. Biochem.">
        <title>Demonstration that a human 26S proteolytic complex consists of a proteasome and multiple associated protein components and hydrolyzes ATP and ubiquitin-ligated proteins by closely linked mechanisms.</title>
        <authorList>
            <person name="Kanayama H.O."/>
            <person name="Tamura T."/>
            <person name="Ugai S."/>
            <person name="Kagawa S."/>
            <person name="Tanahashi N."/>
            <person name="Yoshimura T."/>
            <person name="Tanaka K."/>
            <person name="Ichihara A."/>
        </authorList>
    </citation>
    <scope>FUNCTION</scope>
</reference>
<reference key="8">
    <citation type="journal article" date="1997" name="J. Biol. Chem.">
        <title>HEC binds to the seventh regulatory subunit of the 26 S proteasome and modulates the proteolysis of mitotic cyclins.</title>
        <authorList>
            <person name="Chen Y."/>
            <person name="Sharp Z.D."/>
            <person name="Lee W.-H."/>
        </authorList>
    </citation>
    <scope>INTERACTION WITH NDC80</scope>
</reference>
<reference key="9">
    <citation type="journal article" date="1999" name="Mol. Cell. Biol.">
        <title>Hec1p, an evolutionarily conserved coiled-coil protein, modulates chromosome segregation through interaction with SMC proteins.</title>
        <authorList>
            <person name="Zheng L."/>
            <person name="Chen Y."/>
            <person name="Lee W.-H."/>
        </authorList>
    </citation>
    <scope>INTERACTION WITH NDC80</scope>
</reference>
<reference key="10">
    <citation type="journal article" date="2005" name="Mol. Cell. Biol.">
        <title>Proteasomal ATPase-associated factor 1 negatively regulates proteasome activity by interacting with proteasomal ATPases.</title>
        <authorList>
            <person name="Park Y."/>
            <person name="Hwang Y.-P."/>
            <person name="Lee J.-S."/>
            <person name="Seo S.-H."/>
            <person name="Yoon S.K."/>
            <person name="Yoon J.-B."/>
        </authorList>
    </citation>
    <scope>INTERACTION WITH PAAF1</scope>
</reference>
<reference key="11">
    <citation type="journal article" date="2007" name="Biochemistry">
        <title>Mass spectrometric characterization of the affinity-purified human 26S proteasome complex.</title>
        <authorList>
            <person name="Wang X."/>
            <person name="Chen C.-F."/>
            <person name="Baker P.R."/>
            <person name="Chen P.-L."/>
            <person name="Kaiser P."/>
            <person name="Huang L."/>
        </authorList>
    </citation>
    <scope>IDENTIFICATION BY MASS SPECTROMETRY [LARGE SCALE ANALYSIS]</scope>
    <source>
        <tissue>Embryonic kidney</tissue>
    </source>
</reference>
<reference key="12">
    <citation type="journal article" date="2009" name="Anal. Chem.">
        <title>Lys-N and trypsin cover complementary parts of the phosphoproteome in a refined SCX-based approach.</title>
        <authorList>
            <person name="Gauci S."/>
            <person name="Helbig A.O."/>
            <person name="Slijper M."/>
            <person name="Krijgsveld J."/>
            <person name="Heck A.J."/>
            <person name="Mohammed S."/>
        </authorList>
    </citation>
    <scope>ACETYLATION [LARGE SCALE ANALYSIS] AT ALA-2</scope>
    <scope>CLEAVAGE OF INITIATOR METHIONINE [LARGE SCALE ANALYSIS]</scope>
    <scope>IDENTIFICATION BY MASS SPECTROMETRY [LARGE SCALE ANALYSIS]</scope>
</reference>
<reference key="13">
    <citation type="journal article" date="2009" name="Science">
        <title>Lysine acetylation targets protein complexes and co-regulates major cellular functions.</title>
        <authorList>
            <person name="Choudhary C."/>
            <person name="Kumar C."/>
            <person name="Gnad F."/>
            <person name="Nielsen M.L."/>
            <person name="Rehman M."/>
            <person name="Walther T.C."/>
            <person name="Olsen J.V."/>
            <person name="Mann M."/>
        </authorList>
    </citation>
    <scope>ACETYLATION [LARGE SCALE ANALYSIS] AT LYS-222</scope>
    <scope>IDENTIFICATION BY MASS SPECTROMETRY [LARGE SCALE ANALYSIS]</scope>
</reference>
<reference key="14">
    <citation type="journal article" date="2011" name="BMC Syst. Biol.">
        <title>Initial characterization of the human central proteome.</title>
        <authorList>
            <person name="Burkard T.R."/>
            <person name="Planyavsky M."/>
            <person name="Kaupe I."/>
            <person name="Breitwieser F.P."/>
            <person name="Buerckstuemmer T."/>
            <person name="Bennett K.L."/>
            <person name="Superti-Furga G."/>
            <person name="Colinge J."/>
        </authorList>
    </citation>
    <scope>IDENTIFICATION BY MASS SPECTROMETRY [LARGE SCALE ANALYSIS]</scope>
</reference>
<reference key="15">
    <citation type="journal article" date="2011" name="Retrovirology">
        <title>TRIM5alpha associates with proteasomal subunits in cells while in complex with HIV-1 virions.</title>
        <authorList>
            <person name="Lukic Z."/>
            <person name="Hausmann S."/>
            <person name="Sebastian S."/>
            <person name="Rucci J."/>
            <person name="Sastri J."/>
            <person name="Robia S.L."/>
            <person name="Luban J."/>
            <person name="Campbell E.M."/>
        </authorList>
    </citation>
    <scope>INTERACTION WITH TRIM5</scope>
</reference>
<reference key="16">
    <citation type="journal article" date="2012" name="Mol. Cell. Proteomics">
        <title>Comparative large-scale characterisation of plant vs. mammal proteins reveals similar and idiosyncratic N-alpha acetylation features.</title>
        <authorList>
            <person name="Bienvenut W.V."/>
            <person name="Sumpton D."/>
            <person name="Martinez A."/>
            <person name="Lilla S."/>
            <person name="Espagne C."/>
            <person name="Meinnel T."/>
            <person name="Giglione C."/>
        </authorList>
    </citation>
    <scope>ACETYLATION [LARGE SCALE ANALYSIS] AT ALA-2</scope>
    <scope>CLEAVAGE OF INITIATOR METHIONINE [LARGE SCALE ANALYSIS]</scope>
    <scope>IDENTIFICATION BY MASS SPECTROMETRY [LARGE SCALE ANALYSIS]</scope>
</reference>
<reference key="17">
    <citation type="journal article" date="2012" name="Proc. Natl. Acad. Sci. U.S.A.">
        <title>N-terminal acetylome analyses and functional insights of the N-terminal acetyltransferase NatB.</title>
        <authorList>
            <person name="Van Damme P."/>
            <person name="Lasa M."/>
            <person name="Polevoda B."/>
            <person name="Gazquez C."/>
            <person name="Elosegui-Artola A."/>
            <person name="Kim D.S."/>
            <person name="De Juan-Pardo E."/>
            <person name="Demeyer K."/>
            <person name="Hole K."/>
            <person name="Larrea E."/>
            <person name="Timmerman E."/>
            <person name="Prieto J."/>
            <person name="Arnesen T."/>
            <person name="Sherman F."/>
            <person name="Gevaert K."/>
            <person name="Aldabe R."/>
        </authorList>
    </citation>
    <scope>ACETYLATION [LARGE SCALE ANALYSIS] AT ALA-2</scope>
    <scope>ACETYLATION [LARGE SCALE ANALYSIS] AT MET-1 (ISOFORM 2)</scope>
    <scope>CLEAVAGE OF INITIATOR METHIONINE [LARGE SCALE ANALYSIS]</scope>
    <scope>IDENTIFICATION BY MASS SPECTROMETRY [LARGE SCALE ANALYSIS]</scope>
</reference>
<reference key="18">
    <citation type="journal article" date="2013" name="Genes Dev.">
        <title>USP49 deubiquitinates histone H2B and regulates cotranscriptional pre-mRNA splicing.</title>
        <authorList>
            <person name="Zhang Z."/>
            <person name="Jones A."/>
            <person name="Joo H.Y."/>
            <person name="Zhou D."/>
            <person name="Cao Y."/>
            <person name="Chen S."/>
            <person name="Erdjument-Bromage H."/>
            <person name="Renfrow M."/>
            <person name="He H."/>
            <person name="Tempst P."/>
            <person name="Townes T.M."/>
            <person name="Giles K.E."/>
            <person name="Ma L."/>
            <person name="Wang H."/>
        </authorList>
    </citation>
    <scope>IDENTIFICATION IN A COMPLEX WITH USP49 AND RUVBL1</scope>
</reference>
<reference key="19">
    <citation type="journal article" date="2013" name="J. Proteome Res.">
        <title>Toward a comprehensive characterization of a human cancer cell phosphoproteome.</title>
        <authorList>
            <person name="Zhou H."/>
            <person name="Di Palma S."/>
            <person name="Preisinger C."/>
            <person name="Peng M."/>
            <person name="Polat A.N."/>
            <person name="Heck A.J."/>
            <person name="Mohammed S."/>
        </authorList>
    </citation>
    <scope>PHOSPHORYLATION [LARGE SCALE ANALYSIS] AT SER-120</scope>
    <scope>IDENTIFICATION BY MASS SPECTROMETRY [LARGE SCALE ANALYSIS]</scope>
    <source>
        <tissue>Erythroleukemia</tissue>
    </source>
</reference>
<reference key="20">
    <citation type="journal article" date="2014" name="J. Proteomics">
        <title>An enzyme assisted RP-RPLC approach for in-depth analysis of human liver phosphoproteome.</title>
        <authorList>
            <person name="Bian Y."/>
            <person name="Song C."/>
            <person name="Cheng K."/>
            <person name="Dong M."/>
            <person name="Wang F."/>
            <person name="Huang J."/>
            <person name="Sun D."/>
            <person name="Wang L."/>
            <person name="Ye M."/>
            <person name="Zou H."/>
        </authorList>
    </citation>
    <scope>IDENTIFICATION BY MASS SPECTROMETRY [LARGE SCALE ANALYSIS]</scope>
    <source>
        <tissue>Liver</tissue>
    </source>
</reference>
<reference key="21">
    <citation type="journal article" date="2015" name="Hum. Mol. Genet.">
        <title>Biochemical and cellular analysis of Ogden syndrome reveals downstream Nt-acetylation defects.</title>
        <authorList>
            <person name="Myklebust L.M."/>
            <person name="Van Damme P."/>
            <person name="Stoeve S.I."/>
            <person name="Doerfel M.J."/>
            <person name="Abboud A."/>
            <person name="Kalvik T.V."/>
            <person name="Grauffel C."/>
            <person name="Jonckheere V."/>
            <person name="Wu Y."/>
            <person name="Swensen J."/>
            <person name="Kaasa H."/>
            <person name="Liszczak G."/>
            <person name="Marmorstein R."/>
            <person name="Reuter N."/>
            <person name="Lyon G.J."/>
            <person name="Gevaert K."/>
            <person name="Arnesen T."/>
        </authorList>
    </citation>
    <scope>ACETYLATION AT ALA-2</scope>
    <scope>CLEAVAGE OF INITIATOR METHIONINE</scope>
</reference>
<reference key="22">
    <citation type="journal article" date="2015" name="PLoS ONE">
        <title>Identification of Novel Proteins Co-Purifying with Cockayne Syndrome Group B (CSB) Reveals Potential Roles for CSB in RNA Metabolism and Chromatin Dynamics.</title>
        <authorList>
            <person name="Nicolai S."/>
            <person name="Filippi S."/>
            <person name="Caputo M."/>
            <person name="Cipak L."/>
            <person name="Gregan J."/>
            <person name="Ammerer G."/>
            <person name="Frontini M."/>
            <person name="Willems D."/>
            <person name="Prantera G."/>
            <person name="Balajee A.S."/>
            <person name="Proietti-De-Santis L."/>
        </authorList>
    </citation>
    <scope>INTERACTION WITH ERCC6</scope>
</reference>
<reference key="23">
    <citation type="submission" date="2010-01" db="PDB data bank">
        <title>Crystal structure of a domain of 26s proteasome regulatory subunit 8 from Homo sapiens. Northeast structural genomics consortium target ID HR3102A.</title>
        <authorList>
            <consortium name="Northeast structural genomics consortium (NESG)"/>
        </authorList>
    </citation>
    <scope>X-RAY CRYSTALLOGRAPHY (2.1 ANGSTROMS) OF 318-395</scope>
    <scope>STRUCTURE BY NMR OF 320-395</scope>
</reference>
<reference key="24">
    <citation type="journal article" date="2006" name="Science">
        <title>The consensus coding sequences of human breast and colorectal cancers.</title>
        <authorList>
            <person name="Sjoeblom T."/>
            <person name="Jones S."/>
            <person name="Wood L.D."/>
            <person name="Parsons D.W."/>
            <person name="Lin J."/>
            <person name="Barber T.D."/>
            <person name="Mandelker D."/>
            <person name="Leary R.J."/>
            <person name="Ptak J."/>
            <person name="Silliman N."/>
            <person name="Szabo S."/>
            <person name="Buckhaults P."/>
            <person name="Farrell C."/>
            <person name="Meeh P."/>
            <person name="Markowitz S.D."/>
            <person name="Willis J."/>
            <person name="Dawson D."/>
            <person name="Willson J.K.V."/>
            <person name="Gazdar A.F."/>
            <person name="Hartigan J."/>
            <person name="Wu L."/>
            <person name="Liu C."/>
            <person name="Parmigiani G."/>
            <person name="Park B.H."/>
            <person name="Bachman K.E."/>
            <person name="Papadopoulos N."/>
            <person name="Vogelstein B."/>
            <person name="Kinzler K.W."/>
            <person name="Velculescu V.E."/>
        </authorList>
    </citation>
    <scope>VARIANT [LARGE SCALE ANALYSIS] GLN-60</scope>
</reference>
<reference key="25">
    <citation type="journal article" date="2016" name="Nat. Struct. Mol. Biol.">
        <title>An atomic structure of the human 26S proteasome.</title>
        <authorList>
            <person name="Huang X."/>
            <person name="Luan B."/>
            <person name="Wu J."/>
            <person name="Shi Y."/>
        </authorList>
    </citation>
    <scope>STRUCTURE BY ELECTRON MICROSCOPY (3.50 ANGSTROMS) OF 1-440</scope>
    <scope>SUBUNIT</scope>
</reference>
<reference key="26">
    <citation type="journal article" date="2016" name="Proc. Natl. Acad. Sci. U.S.A.">
        <title>Structure of the human 26S proteasome at a resolution of 3.9 Aa.</title>
        <authorList>
            <person name="Schweitzer A."/>
            <person name="Aufderheide A."/>
            <person name="Rudack T."/>
            <person name="Beck F."/>
            <person name="Pfeifer G."/>
            <person name="Plitzko J.M."/>
            <person name="Sakata E."/>
            <person name="Schulten K."/>
            <person name="Foerster F."/>
            <person name="Baumeister W."/>
        </authorList>
    </citation>
    <scope>STRUCTURE BY ELECTRON MICROSCOPY (4.02 ANGSTROMS) OF 1-440</scope>
    <scope>SUBUNIT</scope>
</reference>